<proteinExistence type="evidence at protein level"/>
<dbReference type="EC" id="7.1.1.2" evidence="7 12"/>
<dbReference type="EMBL" id="J01415">
    <property type="protein sequence ID" value="AAB58954.1"/>
    <property type="molecule type" value="Genomic_DNA"/>
</dbReference>
<dbReference type="EMBL" id="V00662">
    <property type="protein sequence ID" value="CAA24037.1"/>
    <property type="molecule type" value="Genomic_DNA"/>
</dbReference>
<dbReference type="EMBL" id="D38112">
    <property type="protein sequence ID" value="BAA07298.1"/>
    <property type="molecule type" value="Genomic_DNA"/>
</dbReference>
<dbReference type="EMBL" id="AY063322">
    <property type="protein sequence ID" value="AAL47640.1"/>
    <property type="molecule type" value="Genomic_DNA"/>
</dbReference>
<dbReference type="EMBL" id="AY339402">
    <property type="protein sequence ID" value="AAP89047.1"/>
    <property type="molecule type" value="Genomic_DNA"/>
</dbReference>
<dbReference type="EMBL" id="AY339403">
    <property type="protein sequence ID" value="AAP89060.1"/>
    <property type="molecule type" value="Genomic_DNA"/>
</dbReference>
<dbReference type="EMBL" id="AY339404">
    <property type="protein sequence ID" value="AAP89073.1"/>
    <property type="molecule type" value="Genomic_DNA"/>
</dbReference>
<dbReference type="EMBL" id="AY339405">
    <property type="protein sequence ID" value="AAP89086.1"/>
    <property type="molecule type" value="Genomic_DNA"/>
</dbReference>
<dbReference type="EMBL" id="AY339406">
    <property type="protein sequence ID" value="AAP89099.1"/>
    <property type="molecule type" value="Genomic_DNA"/>
</dbReference>
<dbReference type="EMBL" id="AY339407">
    <property type="protein sequence ID" value="AAP89112.1"/>
    <property type="molecule type" value="Genomic_DNA"/>
</dbReference>
<dbReference type="EMBL" id="AY339408">
    <property type="protein sequence ID" value="AAP89125.1"/>
    <property type="molecule type" value="Genomic_DNA"/>
</dbReference>
<dbReference type="EMBL" id="AY339409">
    <property type="protein sequence ID" value="AAP89138.1"/>
    <property type="molecule type" value="Genomic_DNA"/>
</dbReference>
<dbReference type="EMBL" id="AY339410">
    <property type="protein sequence ID" value="AAP89151.1"/>
    <property type="molecule type" value="Genomic_DNA"/>
</dbReference>
<dbReference type="EMBL" id="AY339411">
    <property type="protein sequence ID" value="AAP89164.1"/>
    <property type="molecule type" value="Genomic_DNA"/>
</dbReference>
<dbReference type="EMBL" id="AY339413">
    <property type="protein sequence ID" value="AAP89190.1"/>
    <property type="molecule type" value="Genomic_DNA"/>
</dbReference>
<dbReference type="EMBL" id="AY339414">
    <property type="protein sequence ID" value="AAP89203.1"/>
    <property type="molecule type" value="Genomic_DNA"/>
</dbReference>
<dbReference type="EMBL" id="AY339415">
    <property type="protein sequence ID" value="AAP89216.1"/>
    <property type="molecule type" value="Genomic_DNA"/>
</dbReference>
<dbReference type="EMBL" id="AY339416">
    <property type="protein sequence ID" value="AAP89229.1"/>
    <property type="molecule type" value="Genomic_DNA"/>
</dbReference>
<dbReference type="EMBL" id="AY339417">
    <property type="protein sequence ID" value="AAP89242.1"/>
    <property type="molecule type" value="Genomic_DNA"/>
</dbReference>
<dbReference type="EMBL" id="AY339418">
    <property type="protein sequence ID" value="AAP89255.1"/>
    <property type="molecule type" value="Genomic_DNA"/>
</dbReference>
<dbReference type="EMBL" id="AY339419">
    <property type="protein sequence ID" value="AAP89268.1"/>
    <property type="molecule type" value="Genomic_DNA"/>
</dbReference>
<dbReference type="EMBL" id="AY339420">
    <property type="protein sequence ID" value="AAP89281.1"/>
    <property type="molecule type" value="Genomic_DNA"/>
</dbReference>
<dbReference type="EMBL" id="AY339421">
    <property type="protein sequence ID" value="AAP89294.1"/>
    <property type="molecule type" value="Genomic_DNA"/>
</dbReference>
<dbReference type="EMBL" id="AY339422">
    <property type="protein sequence ID" value="AAP89307.1"/>
    <property type="molecule type" value="Genomic_DNA"/>
</dbReference>
<dbReference type="EMBL" id="AY339423">
    <property type="protein sequence ID" value="AAP89320.1"/>
    <property type="molecule type" value="Genomic_DNA"/>
</dbReference>
<dbReference type="EMBL" id="AY339424">
    <property type="protein sequence ID" value="AAP89333.1"/>
    <property type="molecule type" value="Genomic_DNA"/>
</dbReference>
<dbReference type="EMBL" id="AY339425">
    <property type="protein sequence ID" value="AAP89346.1"/>
    <property type="molecule type" value="Genomic_DNA"/>
</dbReference>
<dbReference type="EMBL" id="AY339426">
    <property type="protein sequence ID" value="AAP89359.1"/>
    <property type="molecule type" value="Genomic_DNA"/>
</dbReference>
<dbReference type="EMBL" id="AY339427">
    <property type="protein sequence ID" value="AAP89372.1"/>
    <property type="molecule type" value="Genomic_DNA"/>
</dbReference>
<dbReference type="EMBL" id="AY339428">
    <property type="protein sequence ID" value="AAP89385.1"/>
    <property type="molecule type" value="Genomic_DNA"/>
</dbReference>
<dbReference type="EMBL" id="AY339429">
    <property type="protein sequence ID" value="AAP89398.1"/>
    <property type="molecule type" value="Genomic_DNA"/>
</dbReference>
<dbReference type="EMBL" id="AY339430">
    <property type="protein sequence ID" value="AAP89411.1"/>
    <property type="molecule type" value="Genomic_DNA"/>
</dbReference>
<dbReference type="EMBL" id="AY339431">
    <property type="protein sequence ID" value="AAP89424.1"/>
    <property type="molecule type" value="Genomic_DNA"/>
</dbReference>
<dbReference type="EMBL" id="AY339432">
    <property type="protein sequence ID" value="AAP89437.1"/>
    <property type="molecule type" value="Genomic_DNA"/>
</dbReference>
<dbReference type="EMBL" id="AY339433">
    <property type="protein sequence ID" value="AAP89450.1"/>
    <property type="molecule type" value="Genomic_DNA"/>
</dbReference>
<dbReference type="EMBL" id="AY339434">
    <property type="protein sequence ID" value="AAP89463.1"/>
    <property type="molecule type" value="Genomic_DNA"/>
</dbReference>
<dbReference type="EMBL" id="AY339435">
    <property type="protein sequence ID" value="AAP89476.1"/>
    <property type="molecule type" value="Genomic_DNA"/>
</dbReference>
<dbReference type="EMBL" id="AY339436">
    <property type="protein sequence ID" value="AAP89489.1"/>
    <property type="molecule type" value="Genomic_DNA"/>
</dbReference>
<dbReference type="EMBL" id="AY339437">
    <property type="protein sequence ID" value="AAP89502.1"/>
    <property type="molecule type" value="Genomic_DNA"/>
</dbReference>
<dbReference type="EMBL" id="AY339438">
    <property type="protein sequence ID" value="AAP89515.1"/>
    <property type="molecule type" value="Genomic_DNA"/>
</dbReference>
<dbReference type="EMBL" id="AY339439">
    <property type="protein sequence ID" value="AAP89528.1"/>
    <property type="molecule type" value="Genomic_DNA"/>
</dbReference>
<dbReference type="EMBL" id="AY339440">
    <property type="protein sequence ID" value="AAP89541.1"/>
    <property type="molecule type" value="Genomic_DNA"/>
</dbReference>
<dbReference type="EMBL" id="AY339441">
    <property type="protein sequence ID" value="AAP89554.1"/>
    <property type="molecule type" value="Genomic_DNA"/>
</dbReference>
<dbReference type="EMBL" id="AY339442">
    <property type="protein sequence ID" value="AAP89567.1"/>
    <property type="molecule type" value="Genomic_DNA"/>
</dbReference>
<dbReference type="EMBL" id="AY339443">
    <property type="protein sequence ID" value="AAP89580.1"/>
    <property type="molecule type" value="Genomic_DNA"/>
</dbReference>
<dbReference type="EMBL" id="AY339444">
    <property type="protein sequence ID" value="AAP89593.1"/>
    <property type="molecule type" value="Genomic_DNA"/>
</dbReference>
<dbReference type="EMBL" id="AY339445">
    <property type="protein sequence ID" value="AAP89606.1"/>
    <property type="molecule type" value="Genomic_DNA"/>
</dbReference>
<dbReference type="EMBL" id="AY339446">
    <property type="protein sequence ID" value="AAP89619.1"/>
    <property type="molecule type" value="Genomic_DNA"/>
</dbReference>
<dbReference type="EMBL" id="AY339447">
    <property type="protein sequence ID" value="AAP89632.1"/>
    <property type="molecule type" value="Genomic_DNA"/>
</dbReference>
<dbReference type="EMBL" id="AY339448">
    <property type="protein sequence ID" value="AAP89645.1"/>
    <property type="molecule type" value="Genomic_DNA"/>
</dbReference>
<dbReference type="EMBL" id="AY339449">
    <property type="protein sequence ID" value="AAP89658.1"/>
    <property type="molecule type" value="Genomic_DNA"/>
</dbReference>
<dbReference type="EMBL" id="AY339450">
    <property type="protein sequence ID" value="AAP89671.1"/>
    <property type="molecule type" value="Genomic_DNA"/>
</dbReference>
<dbReference type="EMBL" id="AY339455">
    <property type="protein sequence ID" value="AAP89736.1"/>
    <property type="molecule type" value="Genomic_DNA"/>
</dbReference>
<dbReference type="EMBL" id="AY339456">
    <property type="protein sequence ID" value="AAP89749.1"/>
    <property type="molecule type" value="Genomic_DNA"/>
</dbReference>
<dbReference type="EMBL" id="AY339457">
    <property type="protein sequence ID" value="AAP89762.1"/>
    <property type="molecule type" value="Genomic_DNA"/>
</dbReference>
<dbReference type="EMBL" id="AY339458">
    <property type="protein sequence ID" value="AAP89775.1"/>
    <property type="molecule type" value="Genomic_DNA"/>
</dbReference>
<dbReference type="EMBL" id="AY339459">
    <property type="protein sequence ID" value="AAP89788.1"/>
    <property type="molecule type" value="Genomic_DNA"/>
</dbReference>
<dbReference type="EMBL" id="AY339460">
    <property type="protein sequence ID" value="AAP89801.1"/>
    <property type="molecule type" value="Genomic_DNA"/>
</dbReference>
<dbReference type="EMBL" id="AY339461">
    <property type="protein sequence ID" value="AAP89814.1"/>
    <property type="molecule type" value="Genomic_DNA"/>
</dbReference>
<dbReference type="EMBL" id="AY339462">
    <property type="protein sequence ID" value="AAP89827.1"/>
    <property type="molecule type" value="Genomic_DNA"/>
</dbReference>
<dbReference type="EMBL" id="AY339463">
    <property type="protein sequence ID" value="AAP89840.1"/>
    <property type="molecule type" value="Genomic_DNA"/>
</dbReference>
<dbReference type="EMBL" id="AY339464">
    <property type="protein sequence ID" value="AAP89853.1"/>
    <property type="molecule type" value="Genomic_DNA"/>
</dbReference>
<dbReference type="EMBL" id="AY339465">
    <property type="protein sequence ID" value="AAP89866.1"/>
    <property type="molecule type" value="Genomic_DNA"/>
</dbReference>
<dbReference type="EMBL" id="AY339466">
    <property type="protein sequence ID" value="AAP89879.1"/>
    <property type="molecule type" value="Genomic_DNA"/>
</dbReference>
<dbReference type="EMBL" id="AY339467">
    <property type="protein sequence ID" value="AAP89892.1"/>
    <property type="molecule type" value="Genomic_DNA"/>
</dbReference>
<dbReference type="EMBL" id="AY339468">
    <property type="protein sequence ID" value="AAP89905.1"/>
    <property type="molecule type" value="Genomic_DNA"/>
</dbReference>
<dbReference type="EMBL" id="AY339469">
    <property type="protein sequence ID" value="AAP89918.1"/>
    <property type="molecule type" value="Genomic_DNA"/>
</dbReference>
<dbReference type="EMBL" id="AY339470">
    <property type="protein sequence ID" value="AAP89931.1"/>
    <property type="molecule type" value="Genomic_DNA"/>
</dbReference>
<dbReference type="EMBL" id="AY339471">
    <property type="protein sequence ID" value="AAP89944.1"/>
    <property type="molecule type" value="Genomic_DNA"/>
</dbReference>
<dbReference type="EMBL" id="AY339472">
    <property type="protein sequence ID" value="AAP89957.1"/>
    <property type="molecule type" value="Genomic_DNA"/>
</dbReference>
<dbReference type="EMBL" id="AY339473">
    <property type="protein sequence ID" value="AAP89970.1"/>
    <property type="molecule type" value="Genomic_DNA"/>
</dbReference>
<dbReference type="EMBL" id="AY339474">
    <property type="protein sequence ID" value="AAP89983.1"/>
    <property type="molecule type" value="Genomic_DNA"/>
</dbReference>
<dbReference type="EMBL" id="AY339475">
    <property type="protein sequence ID" value="AAP89996.1"/>
    <property type="molecule type" value="Genomic_DNA"/>
</dbReference>
<dbReference type="EMBL" id="AY339476">
    <property type="protein sequence ID" value="AAP90009.1"/>
    <property type="molecule type" value="Genomic_DNA"/>
</dbReference>
<dbReference type="EMBL" id="AY339477">
    <property type="protein sequence ID" value="AAP90022.1"/>
    <property type="molecule type" value="Genomic_DNA"/>
</dbReference>
<dbReference type="EMBL" id="AY339478">
    <property type="protein sequence ID" value="AAP90035.1"/>
    <property type="molecule type" value="Genomic_DNA"/>
</dbReference>
<dbReference type="EMBL" id="AY339479">
    <property type="protein sequence ID" value="AAP90048.1"/>
    <property type="molecule type" value="Genomic_DNA"/>
</dbReference>
<dbReference type="EMBL" id="AY339480">
    <property type="protein sequence ID" value="AAP90061.1"/>
    <property type="molecule type" value="Genomic_DNA"/>
</dbReference>
<dbReference type="EMBL" id="AY339481">
    <property type="protein sequence ID" value="AAP90074.1"/>
    <property type="molecule type" value="Genomic_DNA"/>
</dbReference>
<dbReference type="EMBL" id="AY339482">
    <property type="protein sequence ID" value="AAP90087.1"/>
    <property type="molecule type" value="Genomic_DNA"/>
</dbReference>
<dbReference type="EMBL" id="AY339483">
    <property type="protein sequence ID" value="AAP90100.1"/>
    <property type="molecule type" value="Genomic_DNA"/>
</dbReference>
<dbReference type="EMBL" id="AY339484">
    <property type="protein sequence ID" value="AAP90113.1"/>
    <property type="molecule type" value="Genomic_DNA"/>
</dbReference>
<dbReference type="EMBL" id="AY339485">
    <property type="protein sequence ID" value="AAP90126.1"/>
    <property type="molecule type" value="Genomic_DNA"/>
</dbReference>
<dbReference type="EMBL" id="AY339486">
    <property type="protein sequence ID" value="AAP90139.1"/>
    <property type="molecule type" value="Genomic_DNA"/>
</dbReference>
<dbReference type="EMBL" id="AY339487">
    <property type="protein sequence ID" value="AAP90152.1"/>
    <property type="molecule type" value="Genomic_DNA"/>
</dbReference>
<dbReference type="EMBL" id="AY339488">
    <property type="protein sequence ID" value="AAP90165.1"/>
    <property type="molecule type" value="Genomic_DNA"/>
</dbReference>
<dbReference type="EMBL" id="AY339489">
    <property type="protein sequence ID" value="AAP90178.1"/>
    <property type="molecule type" value="Genomic_DNA"/>
</dbReference>
<dbReference type="EMBL" id="AY339490">
    <property type="protein sequence ID" value="AAP90191.1"/>
    <property type="molecule type" value="Genomic_DNA"/>
</dbReference>
<dbReference type="EMBL" id="AY339491">
    <property type="protein sequence ID" value="AAP90204.1"/>
    <property type="molecule type" value="Genomic_DNA"/>
</dbReference>
<dbReference type="EMBL" id="AY339492">
    <property type="protein sequence ID" value="AAP90217.1"/>
    <property type="molecule type" value="Genomic_DNA"/>
</dbReference>
<dbReference type="EMBL" id="AY339493">
    <property type="protein sequence ID" value="AAP90230.1"/>
    <property type="molecule type" value="Genomic_DNA"/>
</dbReference>
<dbReference type="EMBL" id="AY339494">
    <property type="protein sequence ID" value="AAP90243.1"/>
    <property type="molecule type" value="Genomic_DNA"/>
</dbReference>
<dbReference type="EMBL" id="AY339495">
    <property type="protein sequence ID" value="AAP90256.1"/>
    <property type="molecule type" value="Genomic_DNA"/>
</dbReference>
<dbReference type="EMBL" id="AY339496">
    <property type="protein sequence ID" value="AAP90269.1"/>
    <property type="molecule type" value="Genomic_DNA"/>
</dbReference>
<dbReference type="EMBL" id="AY339497">
    <property type="protein sequence ID" value="AAP90282.1"/>
    <property type="molecule type" value="Genomic_DNA"/>
</dbReference>
<dbReference type="EMBL" id="AY339498">
    <property type="protein sequence ID" value="AAP90295.1"/>
    <property type="molecule type" value="Genomic_DNA"/>
</dbReference>
<dbReference type="EMBL" id="AY339499">
    <property type="protein sequence ID" value="AAP90308.1"/>
    <property type="molecule type" value="Genomic_DNA"/>
</dbReference>
<dbReference type="EMBL" id="AY339500">
    <property type="protein sequence ID" value="AAP90321.1"/>
    <property type="molecule type" value="Genomic_DNA"/>
</dbReference>
<dbReference type="EMBL" id="AY339501">
    <property type="protein sequence ID" value="AAP90334.1"/>
    <property type="molecule type" value="Genomic_DNA"/>
</dbReference>
<dbReference type="EMBL" id="AY339502">
    <property type="protein sequence ID" value="AAP90347.1"/>
    <property type="molecule type" value="Genomic_DNA"/>
</dbReference>
<dbReference type="EMBL" id="AY339503">
    <property type="protein sequence ID" value="AAP90360.1"/>
    <property type="molecule type" value="Genomic_DNA"/>
</dbReference>
<dbReference type="EMBL" id="AY339504">
    <property type="protein sequence ID" value="AAP90373.1"/>
    <property type="molecule type" value="Genomic_DNA"/>
</dbReference>
<dbReference type="EMBL" id="AY339505">
    <property type="protein sequence ID" value="AAP90386.1"/>
    <property type="molecule type" value="Genomic_DNA"/>
</dbReference>
<dbReference type="EMBL" id="AY339506">
    <property type="protein sequence ID" value="AAP90399.1"/>
    <property type="molecule type" value="Genomic_DNA"/>
</dbReference>
<dbReference type="EMBL" id="AY339507">
    <property type="protein sequence ID" value="AAP90412.1"/>
    <property type="molecule type" value="Genomic_DNA"/>
</dbReference>
<dbReference type="EMBL" id="AY339508">
    <property type="protein sequence ID" value="AAP90425.1"/>
    <property type="molecule type" value="Genomic_DNA"/>
</dbReference>
<dbReference type="EMBL" id="AY339509">
    <property type="protein sequence ID" value="AAP90438.1"/>
    <property type="molecule type" value="Genomic_DNA"/>
</dbReference>
<dbReference type="EMBL" id="AY339510">
    <property type="protein sequence ID" value="AAP90451.1"/>
    <property type="molecule type" value="Genomic_DNA"/>
</dbReference>
<dbReference type="EMBL" id="AY339511">
    <property type="protein sequence ID" value="AAP90464.1"/>
    <property type="molecule type" value="Genomic_DNA"/>
</dbReference>
<dbReference type="EMBL" id="AY339512">
    <property type="protein sequence ID" value="AAP90477.1"/>
    <property type="molecule type" value="Genomic_DNA"/>
</dbReference>
<dbReference type="EMBL" id="AY339513">
    <property type="protein sequence ID" value="AAP90490.1"/>
    <property type="molecule type" value="Genomic_DNA"/>
</dbReference>
<dbReference type="EMBL" id="AY339514">
    <property type="protein sequence ID" value="AAP90503.1"/>
    <property type="molecule type" value="Genomic_DNA"/>
</dbReference>
<dbReference type="EMBL" id="AY339515">
    <property type="protein sequence ID" value="AAP90516.1"/>
    <property type="molecule type" value="Genomic_DNA"/>
</dbReference>
<dbReference type="EMBL" id="AY339516">
    <property type="protein sequence ID" value="AAP90529.1"/>
    <property type="molecule type" value="Genomic_DNA"/>
</dbReference>
<dbReference type="EMBL" id="AY339517">
    <property type="protein sequence ID" value="AAP90542.1"/>
    <property type="molecule type" value="Genomic_DNA"/>
</dbReference>
<dbReference type="EMBL" id="AY339518">
    <property type="protein sequence ID" value="AAP90555.1"/>
    <property type="molecule type" value="Genomic_DNA"/>
</dbReference>
<dbReference type="EMBL" id="AY339519">
    <property type="protein sequence ID" value="AAP90568.1"/>
    <property type="molecule type" value="Genomic_DNA"/>
</dbReference>
<dbReference type="EMBL" id="AY339520">
    <property type="protein sequence ID" value="AAP90581.1"/>
    <property type="molecule type" value="Genomic_DNA"/>
</dbReference>
<dbReference type="EMBL" id="AY339521">
    <property type="protein sequence ID" value="AAP90594.1"/>
    <property type="molecule type" value="Genomic_DNA"/>
</dbReference>
<dbReference type="EMBL" id="AY339522">
    <property type="protein sequence ID" value="AAP90607.1"/>
    <property type="molecule type" value="Genomic_DNA"/>
</dbReference>
<dbReference type="EMBL" id="AY339523">
    <property type="protein sequence ID" value="AAP90620.1"/>
    <property type="molecule type" value="Genomic_DNA"/>
</dbReference>
<dbReference type="EMBL" id="AY339524">
    <property type="protein sequence ID" value="AAP90633.1"/>
    <property type="molecule type" value="Genomic_DNA"/>
</dbReference>
<dbReference type="EMBL" id="AY339525">
    <property type="protein sequence ID" value="AAP90646.1"/>
    <property type="molecule type" value="Genomic_DNA"/>
</dbReference>
<dbReference type="EMBL" id="AY339526">
    <property type="protein sequence ID" value="AAP90659.1"/>
    <property type="molecule type" value="Genomic_DNA"/>
</dbReference>
<dbReference type="EMBL" id="AY339528">
    <property type="protein sequence ID" value="AAP90685.1"/>
    <property type="molecule type" value="Genomic_DNA"/>
</dbReference>
<dbReference type="EMBL" id="AY339529">
    <property type="protein sequence ID" value="AAP90698.1"/>
    <property type="molecule type" value="Genomic_DNA"/>
</dbReference>
<dbReference type="EMBL" id="AY339530">
    <property type="protein sequence ID" value="AAP90711.1"/>
    <property type="molecule type" value="Genomic_DNA"/>
</dbReference>
<dbReference type="EMBL" id="AY339531">
    <property type="protein sequence ID" value="AAP90724.1"/>
    <property type="molecule type" value="Genomic_DNA"/>
</dbReference>
<dbReference type="EMBL" id="AY339532">
    <property type="protein sequence ID" value="AAP90737.1"/>
    <property type="molecule type" value="Genomic_DNA"/>
</dbReference>
<dbReference type="EMBL" id="AY339533">
    <property type="protein sequence ID" value="AAP90750.1"/>
    <property type="molecule type" value="Genomic_DNA"/>
</dbReference>
<dbReference type="EMBL" id="AY339534">
    <property type="protein sequence ID" value="AAP90763.1"/>
    <property type="molecule type" value="Genomic_DNA"/>
</dbReference>
<dbReference type="EMBL" id="AY339535">
    <property type="protein sequence ID" value="AAP90776.1"/>
    <property type="molecule type" value="Genomic_DNA"/>
</dbReference>
<dbReference type="EMBL" id="AY339536">
    <property type="protein sequence ID" value="AAP90789.1"/>
    <property type="molecule type" value="Genomic_DNA"/>
</dbReference>
<dbReference type="EMBL" id="AY339537">
    <property type="protein sequence ID" value="AAP90802.1"/>
    <property type="molecule type" value="Genomic_DNA"/>
</dbReference>
<dbReference type="EMBL" id="AY339538">
    <property type="protein sequence ID" value="AAP90815.1"/>
    <property type="molecule type" value="Genomic_DNA"/>
</dbReference>
<dbReference type="EMBL" id="AY339539">
    <property type="protein sequence ID" value="AAP90828.1"/>
    <property type="molecule type" value="Genomic_DNA"/>
</dbReference>
<dbReference type="EMBL" id="AY339540">
    <property type="protein sequence ID" value="AAP90841.1"/>
    <property type="molecule type" value="Genomic_DNA"/>
</dbReference>
<dbReference type="EMBL" id="AY339541">
    <property type="protein sequence ID" value="AAP90854.1"/>
    <property type="molecule type" value="Genomic_DNA"/>
</dbReference>
<dbReference type="EMBL" id="AY339542">
    <property type="protein sequence ID" value="AAP90867.1"/>
    <property type="molecule type" value="Genomic_DNA"/>
</dbReference>
<dbReference type="EMBL" id="AY339543">
    <property type="protein sequence ID" value="AAP90880.1"/>
    <property type="molecule type" value="Genomic_DNA"/>
</dbReference>
<dbReference type="EMBL" id="AY339544">
    <property type="protein sequence ID" value="AAP90893.1"/>
    <property type="molecule type" value="Genomic_DNA"/>
</dbReference>
<dbReference type="EMBL" id="AY339545">
    <property type="protein sequence ID" value="AAP90906.1"/>
    <property type="molecule type" value="Genomic_DNA"/>
</dbReference>
<dbReference type="EMBL" id="AY339546">
    <property type="protein sequence ID" value="AAP90919.1"/>
    <property type="molecule type" value="Genomic_DNA"/>
</dbReference>
<dbReference type="EMBL" id="AY339547">
    <property type="protein sequence ID" value="AAP90932.1"/>
    <property type="molecule type" value="Genomic_DNA"/>
</dbReference>
<dbReference type="EMBL" id="AY339548">
    <property type="protein sequence ID" value="AAP90945.1"/>
    <property type="molecule type" value="Genomic_DNA"/>
</dbReference>
<dbReference type="EMBL" id="AY339549">
    <property type="protein sequence ID" value="AAP90958.1"/>
    <property type="molecule type" value="Genomic_DNA"/>
</dbReference>
<dbReference type="EMBL" id="AY339550">
    <property type="protein sequence ID" value="AAP90971.1"/>
    <property type="molecule type" value="Genomic_DNA"/>
</dbReference>
<dbReference type="EMBL" id="AY339551">
    <property type="protein sequence ID" value="AAP90984.1"/>
    <property type="molecule type" value="Genomic_DNA"/>
</dbReference>
<dbReference type="EMBL" id="AY339552">
    <property type="protein sequence ID" value="AAP90997.1"/>
    <property type="molecule type" value="Genomic_DNA"/>
</dbReference>
<dbReference type="EMBL" id="AY339553">
    <property type="protein sequence ID" value="AAP91010.1"/>
    <property type="molecule type" value="Genomic_DNA"/>
</dbReference>
<dbReference type="EMBL" id="AY339554">
    <property type="protein sequence ID" value="AAP91023.1"/>
    <property type="molecule type" value="Genomic_DNA"/>
</dbReference>
<dbReference type="EMBL" id="AY339555">
    <property type="protein sequence ID" value="AAP91036.1"/>
    <property type="molecule type" value="Genomic_DNA"/>
</dbReference>
<dbReference type="EMBL" id="AY339556">
    <property type="protein sequence ID" value="AAP91049.1"/>
    <property type="molecule type" value="Genomic_DNA"/>
</dbReference>
<dbReference type="EMBL" id="AY339557">
    <property type="protein sequence ID" value="AAP91062.1"/>
    <property type="molecule type" value="Genomic_DNA"/>
</dbReference>
<dbReference type="EMBL" id="AY339558">
    <property type="protein sequence ID" value="AAP91075.1"/>
    <property type="molecule type" value="Genomic_DNA"/>
</dbReference>
<dbReference type="EMBL" id="AY339559">
    <property type="protein sequence ID" value="AAP91088.1"/>
    <property type="molecule type" value="Genomic_DNA"/>
</dbReference>
<dbReference type="EMBL" id="AY339560">
    <property type="protein sequence ID" value="AAP91101.1"/>
    <property type="molecule type" value="Genomic_DNA"/>
</dbReference>
<dbReference type="EMBL" id="AY339561">
    <property type="protein sequence ID" value="AAP91114.1"/>
    <property type="molecule type" value="Genomic_DNA"/>
</dbReference>
<dbReference type="EMBL" id="AY339562">
    <property type="protein sequence ID" value="AAP91127.1"/>
    <property type="molecule type" value="Genomic_DNA"/>
</dbReference>
<dbReference type="EMBL" id="AY339563">
    <property type="protein sequence ID" value="AAP91140.1"/>
    <property type="molecule type" value="Genomic_DNA"/>
</dbReference>
<dbReference type="EMBL" id="AY339564">
    <property type="protein sequence ID" value="AAP91153.1"/>
    <property type="molecule type" value="Genomic_DNA"/>
</dbReference>
<dbReference type="EMBL" id="AY339565">
    <property type="protein sequence ID" value="AAP91166.1"/>
    <property type="molecule type" value="Genomic_DNA"/>
</dbReference>
<dbReference type="EMBL" id="AY339566">
    <property type="protein sequence ID" value="AAP91179.1"/>
    <property type="molecule type" value="Genomic_DNA"/>
</dbReference>
<dbReference type="EMBL" id="AY339567">
    <property type="protein sequence ID" value="AAP91192.1"/>
    <property type="molecule type" value="Genomic_DNA"/>
</dbReference>
<dbReference type="EMBL" id="AY339568">
    <property type="protein sequence ID" value="AAP91205.1"/>
    <property type="molecule type" value="Genomic_DNA"/>
</dbReference>
<dbReference type="EMBL" id="AY339569">
    <property type="protein sequence ID" value="AAP91218.1"/>
    <property type="molecule type" value="Genomic_DNA"/>
</dbReference>
<dbReference type="EMBL" id="AY339570">
    <property type="protein sequence ID" value="AAP91231.1"/>
    <property type="molecule type" value="Genomic_DNA"/>
</dbReference>
<dbReference type="EMBL" id="AY339571">
    <property type="protein sequence ID" value="AAP91244.1"/>
    <property type="molecule type" value="Genomic_DNA"/>
</dbReference>
<dbReference type="EMBL" id="AY339572">
    <property type="protein sequence ID" value="AAP91257.1"/>
    <property type="molecule type" value="Genomic_DNA"/>
</dbReference>
<dbReference type="EMBL" id="AY339573">
    <property type="protein sequence ID" value="AAP91270.1"/>
    <property type="molecule type" value="Genomic_DNA"/>
</dbReference>
<dbReference type="EMBL" id="AY339574">
    <property type="protein sequence ID" value="AAP91283.1"/>
    <property type="molecule type" value="Genomic_DNA"/>
</dbReference>
<dbReference type="EMBL" id="AY339575">
    <property type="protein sequence ID" value="AAP91296.1"/>
    <property type="molecule type" value="Genomic_DNA"/>
</dbReference>
<dbReference type="EMBL" id="AY339576">
    <property type="protein sequence ID" value="AAP91309.1"/>
    <property type="molecule type" value="Genomic_DNA"/>
</dbReference>
<dbReference type="EMBL" id="AY339577">
    <property type="protein sequence ID" value="AAP91322.1"/>
    <property type="molecule type" value="Genomic_DNA"/>
</dbReference>
<dbReference type="EMBL" id="AY339578">
    <property type="protein sequence ID" value="AAP91335.1"/>
    <property type="molecule type" value="Genomic_DNA"/>
</dbReference>
<dbReference type="EMBL" id="AY339579">
    <property type="protein sequence ID" value="AAP91348.1"/>
    <property type="molecule type" value="Genomic_DNA"/>
</dbReference>
<dbReference type="EMBL" id="AY339580">
    <property type="protein sequence ID" value="AAP91361.1"/>
    <property type="molecule type" value="Genomic_DNA"/>
</dbReference>
<dbReference type="EMBL" id="AY339581">
    <property type="protein sequence ID" value="AAP91374.1"/>
    <property type="molecule type" value="Genomic_DNA"/>
</dbReference>
<dbReference type="EMBL" id="AY339582">
    <property type="protein sequence ID" value="AAP91387.1"/>
    <property type="molecule type" value="Genomic_DNA"/>
</dbReference>
<dbReference type="EMBL" id="AY339583">
    <property type="protein sequence ID" value="AAP91400.1"/>
    <property type="molecule type" value="Genomic_DNA"/>
</dbReference>
<dbReference type="EMBL" id="AY339584">
    <property type="protein sequence ID" value="AAP91413.1"/>
    <property type="molecule type" value="Genomic_DNA"/>
</dbReference>
<dbReference type="EMBL" id="AY339585">
    <property type="protein sequence ID" value="AAP91426.1"/>
    <property type="molecule type" value="Genomic_DNA"/>
</dbReference>
<dbReference type="EMBL" id="AY339586">
    <property type="protein sequence ID" value="AAP91439.1"/>
    <property type="molecule type" value="Genomic_DNA"/>
</dbReference>
<dbReference type="EMBL" id="AY339587">
    <property type="protein sequence ID" value="AAP91452.1"/>
    <property type="molecule type" value="Genomic_DNA"/>
</dbReference>
<dbReference type="EMBL" id="AY339588">
    <property type="protein sequence ID" value="AAP91465.1"/>
    <property type="molecule type" value="Genomic_DNA"/>
</dbReference>
<dbReference type="EMBL" id="AY339589">
    <property type="protein sequence ID" value="AAP91478.1"/>
    <property type="molecule type" value="Genomic_DNA"/>
</dbReference>
<dbReference type="EMBL" id="AY339590">
    <property type="protein sequence ID" value="AAP91491.1"/>
    <property type="molecule type" value="Genomic_DNA"/>
</dbReference>
<dbReference type="EMBL" id="AY339591">
    <property type="protein sequence ID" value="AAP91504.1"/>
    <property type="molecule type" value="Genomic_DNA"/>
</dbReference>
<dbReference type="EMBL" id="AY339592">
    <property type="protein sequence ID" value="AAP91517.1"/>
    <property type="molecule type" value="Genomic_DNA"/>
</dbReference>
<dbReference type="EMBL" id="AY339593">
    <property type="protein sequence ID" value="AAP91530.1"/>
    <property type="molecule type" value="Genomic_DNA"/>
</dbReference>
<dbReference type="EMBL" id="AF346964">
    <property type="protein sequence ID" value="AAK17231.1"/>
    <property type="molecule type" value="Genomic_DNA"/>
</dbReference>
<dbReference type="EMBL" id="AF346965">
    <property type="protein sequence ID" value="AAK17244.1"/>
    <property type="molecule type" value="Genomic_DNA"/>
</dbReference>
<dbReference type="EMBL" id="AF346966">
    <property type="protein sequence ID" value="AAK17257.1"/>
    <property type="molecule type" value="Genomic_DNA"/>
</dbReference>
<dbReference type="EMBL" id="AF346967">
    <property type="protein sequence ID" value="AAK17270.1"/>
    <property type="molecule type" value="Genomic_DNA"/>
</dbReference>
<dbReference type="EMBL" id="AF346971">
    <property type="protein sequence ID" value="AAK17322.1"/>
    <property type="molecule type" value="Genomic_DNA"/>
</dbReference>
<dbReference type="EMBL" id="AF346972">
    <property type="protein sequence ID" value="AAK17335.1"/>
    <property type="molecule type" value="Genomic_DNA"/>
</dbReference>
<dbReference type="EMBL" id="AF346973">
    <property type="protein sequence ID" value="AAK17348.1"/>
    <property type="molecule type" value="Genomic_DNA"/>
</dbReference>
<dbReference type="EMBL" id="AF346974">
    <property type="protein sequence ID" value="AAK17361.1"/>
    <property type="molecule type" value="Genomic_DNA"/>
</dbReference>
<dbReference type="EMBL" id="AF346975">
    <property type="protein sequence ID" value="AAK17374.1"/>
    <property type="molecule type" value="Genomic_DNA"/>
</dbReference>
<dbReference type="EMBL" id="AF346976">
    <property type="protein sequence ID" value="AAK17387.1"/>
    <property type="molecule type" value="Genomic_DNA"/>
</dbReference>
<dbReference type="EMBL" id="AF346977">
    <property type="protein sequence ID" value="AAK17400.1"/>
    <property type="molecule type" value="Genomic_DNA"/>
</dbReference>
<dbReference type="EMBL" id="AF346978">
    <property type="protein sequence ID" value="AAK17413.1"/>
    <property type="molecule type" value="Genomic_DNA"/>
</dbReference>
<dbReference type="EMBL" id="AF346981">
    <property type="protein sequence ID" value="AAK17452.1"/>
    <property type="molecule type" value="Genomic_DNA"/>
</dbReference>
<dbReference type="EMBL" id="AF346982">
    <property type="protein sequence ID" value="AAK17465.1"/>
    <property type="molecule type" value="Genomic_DNA"/>
</dbReference>
<dbReference type="EMBL" id="AF346983">
    <property type="protein sequence ID" value="AAK17478.1"/>
    <property type="molecule type" value="Genomic_DNA"/>
</dbReference>
<dbReference type="EMBL" id="AF346984">
    <property type="protein sequence ID" value="AAK17491.1"/>
    <property type="molecule type" value="Genomic_DNA"/>
</dbReference>
<dbReference type="EMBL" id="AF346985">
    <property type="protein sequence ID" value="AAK17504.1"/>
    <property type="molecule type" value="Genomic_DNA"/>
</dbReference>
<dbReference type="EMBL" id="AF346988">
    <property type="protein sequence ID" value="AAK17543.1"/>
    <property type="molecule type" value="Genomic_DNA"/>
</dbReference>
<dbReference type="EMBL" id="AF346989">
    <property type="protein sequence ID" value="AAK17556.1"/>
    <property type="molecule type" value="Genomic_DNA"/>
</dbReference>
<dbReference type="EMBL" id="AF346990">
    <property type="protein sequence ID" value="AAK17569.1"/>
    <property type="molecule type" value="Genomic_DNA"/>
</dbReference>
<dbReference type="EMBL" id="AF346993">
    <property type="protein sequence ID" value="AAK17608.1"/>
    <property type="molecule type" value="Genomic_DNA"/>
</dbReference>
<dbReference type="EMBL" id="AF346994">
    <property type="protein sequence ID" value="AAK17621.1"/>
    <property type="molecule type" value="Genomic_DNA"/>
</dbReference>
<dbReference type="EMBL" id="AF346995">
    <property type="protein sequence ID" value="AAK17634.1"/>
    <property type="molecule type" value="Genomic_DNA"/>
</dbReference>
<dbReference type="EMBL" id="AF346998">
    <property type="protein sequence ID" value="AAK17673.1"/>
    <property type="molecule type" value="Genomic_DNA"/>
</dbReference>
<dbReference type="EMBL" id="AF346999">
    <property type="protein sequence ID" value="AAK17686.1"/>
    <property type="molecule type" value="Genomic_DNA"/>
</dbReference>
<dbReference type="EMBL" id="AF347000">
    <property type="protein sequence ID" value="AAK17699.1"/>
    <property type="molecule type" value="Genomic_DNA"/>
</dbReference>
<dbReference type="EMBL" id="AF347001">
    <property type="protein sequence ID" value="AAK17712.1"/>
    <property type="molecule type" value="Genomic_DNA"/>
</dbReference>
<dbReference type="EMBL" id="AF347002">
    <property type="protein sequence ID" value="AAK17725.1"/>
    <property type="molecule type" value="Genomic_DNA"/>
</dbReference>
<dbReference type="EMBL" id="AF347003">
    <property type="protein sequence ID" value="AAK17738.1"/>
    <property type="molecule type" value="Genomic_DNA"/>
</dbReference>
<dbReference type="EMBL" id="AF347004">
    <property type="protein sequence ID" value="AAK17751.1"/>
    <property type="molecule type" value="Genomic_DNA"/>
</dbReference>
<dbReference type="EMBL" id="AF347005">
    <property type="protein sequence ID" value="AAK17764.1"/>
    <property type="molecule type" value="Genomic_DNA"/>
</dbReference>
<dbReference type="EMBL" id="AF347006">
    <property type="protein sequence ID" value="AAK17777.1"/>
    <property type="molecule type" value="Genomic_DNA"/>
</dbReference>
<dbReference type="EMBL" id="AF347007">
    <property type="protein sequence ID" value="AAK17790.1"/>
    <property type="molecule type" value="Genomic_DNA"/>
</dbReference>
<dbReference type="EMBL" id="AF347008">
    <property type="protein sequence ID" value="AAK17803.1"/>
    <property type="molecule type" value="Genomic_DNA"/>
</dbReference>
<dbReference type="EMBL" id="AF347009">
    <property type="protein sequence ID" value="AAK17816.1"/>
    <property type="molecule type" value="Genomic_DNA"/>
</dbReference>
<dbReference type="EMBL" id="AF347010">
    <property type="protein sequence ID" value="AAK17829.1"/>
    <property type="molecule type" value="Genomic_DNA"/>
</dbReference>
<dbReference type="EMBL" id="AF347014">
    <property type="protein sequence ID" value="AAK17881.1"/>
    <property type="molecule type" value="Genomic_DNA"/>
</dbReference>
<dbReference type="EMBL" id="AF347015">
    <property type="protein sequence ID" value="AAK17894.1"/>
    <property type="molecule type" value="Genomic_DNA"/>
</dbReference>
<dbReference type="EMBL" id="AY289052">
    <property type="protein sequence ID" value="AAP47904.1"/>
    <property type="molecule type" value="Genomic_DNA"/>
</dbReference>
<dbReference type="EMBL" id="AY289053">
    <property type="protein sequence ID" value="AAP47917.1"/>
    <property type="molecule type" value="Genomic_DNA"/>
</dbReference>
<dbReference type="EMBL" id="AY289056">
    <property type="protein sequence ID" value="AAP47956.1"/>
    <property type="molecule type" value="Genomic_DNA"/>
</dbReference>
<dbReference type="EMBL" id="AY289057">
    <property type="protein sequence ID" value="AAP47969.1"/>
    <property type="molecule type" value="Genomic_DNA"/>
</dbReference>
<dbReference type="EMBL" id="AY289058">
    <property type="protein sequence ID" value="AAP47982.1"/>
    <property type="molecule type" value="Genomic_DNA"/>
</dbReference>
<dbReference type="EMBL" id="AY289059">
    <property type="protein sequence ID" value="AAP47995.1"/>
    <property type="molecule type" value="Genomic_DNA"/>
</dbReference>
<dbReference type="EMBL" id="AY289060">
    <property type="protein sequence ID" value="AAP48008.1"/>
    <property type="molecule type" value="Genomic_DNA"/>
</dbReference>
<dbReference type="EMBL" id="AY289062">
    <property type="protein sequence ID" value="AAP48034.1"/>
    <property type="molecule type" value="Genomic_DNA"/>
</dbReference>
<dbReference type="EMBL" id="AY289063">
    <property type="protein sequence ID" value="AAP48047.1"/>
    <property type="molecule type" value="Genomic_DNA"/>
</dbReference>
<dbReference type="EMBL" id="AY289064">
    <property type="protein sequence ID" value="AAP48060.1"/>
    <property type="molecule type" value="Genomic_DNA"/>
</dbReference>
<dbReference type="EMBL" id="AY289065">
    <property type="protein sequence ID" value="AAP48073.1"/>
    <property type="molecule type" value="Genomic_DNA"/>
</dbReference>
<dbReference type="EMBL" id="AY289066">
    <property type="protein sequence ID" value="AAP48086.1"/>
    <property type="molecule type" value="Genomic_DNA"/>
</dbReference>
<dbReference type="EMBL" id="AY289067">
    <property type="protein sequence ID" value="AAP48099.1"/>
    <property type="molecule type" value="Genomic_DNA"/>
</dbReference>
<dbReference type="EMBL" id="AY289068">
    <property type="protein sequence ID" value="AAP48112.1"/>
    <property type="molecule type" value="Genomic_DNA"/>
</dbReference>
<dbReference type="EMBL" id="AY289069">
    <property type="protein sequence ID" value="AAP48125.1"/>
    <property type="molecule type" value="Genomic_DNA"/>
</dbReference>
<dbReference type="EMBL" id="AY289070">
    <property type="protein sequence ID" value="AAP48138.1"/>
    <property type="molecule type" value="Genomic_DNA"/>
</dbReference>
<dbReference type="EMBL" id="AY289071">
    <property type="protein sequence ID" value="AAP48151.1"/>
    <property type="molecule type" value="Genomic_DNA"/>
</dbReference>
<dbReference type="EMBL" id="AY289072">
    <property type="protein sequence ID" value="AAP48164.1"/>
    <property type="molecule type" value="Genomic_DNA"/>
</dbReference>
<dbReference type="EMBL" id="AY289073">
    <property type="protein sequence ID" value="AAP48177.1"/>
    <property type="molecule type" value="Genomic_DNA"/>
</dbReference>
<dbReference type="EMBL" id="AY289074">
    <property type="protein sequence ID" value="AAP48190.1"/>
    <property type="molecule type" value="Genomic_DNA"/>
</dbReference>
<dbReference type="EMBL" id="AY289075">
    <property type="protein sequence ID" value="AAP48203.1"/>
    <property type="molecule type" value="Genomic_DNA"/>
</dbReference>
<dbReference type="EMBL" id="AY289076">
    <property type="protein sequence ID" value="AAP48216.1"/>
    <property type="molecule type" value="Genomic_DNA"/>
</dbReference>
<dbReference type="EMBL" id="AY289077">
    <property type="protein sequence ID" value="AAP48229.1"/>
    <property type="molecule type" value="Genomic_DNA"/>
</dbReference>
<dbReference type="EMBL" id="AY289078">
    <property type="protein sequence ID" value="AAP48242.1"/>
    <property type="molecule type" value="Genomic_DNA"/>
</dbReference>
<dbReference type="EMBL" id="AY289079">
    <property type="protein sequence ID" value="AAP48255.1"/>
    <property type="molecule type" value="Genomic_DNA"/>
</dbReference>
<dbReference type="EMBL" id="AY289080">
    <property type="protein sequence ID" value="AAP48268.1"/>
    <property type="molecule type" value="Genomic_DNA"/>
</dbReference>
<dbReference type="EMBL" id="AY289081">
    <property type="protein sequence ID" value="AAP48281.1"/>
    <property type="molecule type" value="Genomic_DNA"/>
</dbReference>
<dbReference type="EMBL" id="AY289082">
    <property type="protein sequence ID" value="AAP48294.1"/>
    <property type="molecule type" value="Genomic_DNA"/>
</dbReference>
<dbReference type="EMBL" id="AY289083">
    <property type="protein sequence ID" value="AAP48307.1"/>
    <property type="molecule type" value="Genomic_DNA"/>
</dbReference>
<dbReference type="EMBL" id="AY289084">
    <property type="protein sequence ID" value="AAP48320.1"/>
    <property type="molecule type" value="Genomic_DNA"/>
</dbReference>
<dbReference type="EMBL" id="AY289085">
    <property type="protein sequence ID" value="AAP48333.1"/>
    <property type="molecule type" value="Genomic_DNA"/>
</dbReference>
<dbReference type="EMBL" id="AY289086">
    <property type="protein sequence ID" value="AAP48346.1"/>
    <property type="molecule type" value="Genomic_DNA"/>
</dbReference>
<dbReference type="EMBL" id="AY289088">
    <property type="protein sequence ID" value="AAP48372.1"/>
    <property type="molecule type" value="Genomic_DNA"/>
</dbReference>
<dbReference type="EMBL" id="AY289089">
    <property type="protein sequence ID" value="AAP48385.1"/>
    <property type="molecule type" value="Genomic_DNA"/>
</dbReference>
<dbReference type="EMBL" id="AY289090">
    <property type="protein sequence ID" value="AAP48398.1"/>
    <property type="molecule type" value="Genomic_DNA"/>
</dbReference>
<dbReference type="EMBL" id="AY289091">
    <property type="protein sequence ID" value="AAP48411.1"/>
    <property type="molecule type" value="Genomic_DNA"/>
</dbReference>
<dbReference type="EMBL" id="AY289092">
    <property type="protein sequence ID" value="AAP48423.1"/>
    <property type="molecule type" value="Genomic_DNA"/>
</dbReference>
<dbReference type="EMBL" id="AY289093">
    <property type="protein sequence ID" value="AAP48436.1"/>
    <property type="molecule type" value="Genomic_DNA"/>
</dbReference>
<dbReference type="EMBL" id="AY289094">
    <property type="protein sequence ID" value="AAP48449.1"/>
    <property type="molecule type" value="Genomic_DNA"/>
</dbReference>
<dbReference type="EMBL" id="AY289095">
    <property type="protein sequence ID" value="AAP48462.1"/>
    <property type="molecule type" value="Genomic_DNA"/>
</dbReference>
<dbReference type="EMBL" id="AY289096">
    <property type="protein sequence ID" value="AAP48475.1"/>
    <property type="molecule type" value="Genomic_DNA"/>
</dbReference>
<dbReference type="EMBL" id="AY289097">
    <property type="protein sequence ID" value="AAP48488.1"/>
    <property type="molecule type" value="Genomic_DNA"/>
</dbReference>
<dbReference type="EMBL" id="AY289098">
    <property type="protein sequence ID" value="AAP48501.1"/>
    <property type="molecule type" value="Genomic_DNA"/>
</dbReference>
<dbReference type="EMBL" id="AY289099">
    <property type="protein sequence ID" value="AAP48514.1"/>
    <property type="molecule type" value="Genomic_DNA"/>
</dbReference>
<dbReference type="EMBL" id="AY289100">
    <property type="protein sequence ID" value="AAP48527.1"/>
    <property type="molecule type" value="Genomic_DNA"/>
</dbReference>
<dbReference type="EMBL" id="AY289101">
    <property type="protein sequence ID" value="AAP48540.1"/>
    <property type="molecule type" value="Genomic_DNA"/>
</dbReference>
<dbReference type="EMBL" id="AY289102">
    <property type="protein sequence ID" value="AAP48553.1"/>
    <property type="molecule type" value="Genomic_DNA"/>
</dbReference>
<dbReference type="EMBL" id="AY495090">
    <property type="protein sequence ID" value="AAR92507.1"/>
    <property type="molecule type" value="Genomic_DNA"/>
</dbReference>
<dbReference type="EMBL" id="AY495091">
    <property type="protein sequence ID" value="AAR92520.1"/>
    <property type="molecule type" value="Genomic_DNA"/>
</dbReference>
<dbReference type="EMBL" id="AY495092">
    <property type="protein sequence ID" value="AAR92533.1"/>
    <property type="molecule type" value="Genomic_DNA"/>
</dbReference>
<dbReference type="EMBL" id="AY495093">
    <property type="protein sequence ID" value="AAR92546.1"/>
    <property type="molecule type" value="Genomic_DNA"/>
</dbReference>
<dbReference type="EMBL" id="AY495094">
    <property type="protein sequence ID" value="AAR92559.1"/>
    <property type="molecule type" value="Genomic_DNA"/>
</dbReference>
<dbReference type="EMBL" id="AY495096">
    <property type="protein sequence ID" value="AAR92585.1"/>
    <property type="molecule type" value="Genomic_DNA"/>
</dbReference>
<dbReference type="EMBL" id="AY495097">
    <property type="protein sequence ID" value="AAR92598.1"/>
    <property type="molecule type" value="Genomic_DNA"/>
</dbReference>
<dbReference type="EMBL" id="AY495098">
    <property type="protein sequence ID" value="AAR92611.1"/>
    <property type="molecule type" value="Genomic_DNA"/>
</dbReference>
<dbReference type="EMBL" id="AY495099">
    <property type="protein sequence ID" value="AAR92624.1"/>
    <property type="molecule type" value="Genomic_DNA"/>
</dbReference>
<dbReference type="EMBL" id="AY495100">
    <property type="protein sequence ID" value="AAR92637.1"/>
    <property type="molecule type" value="Genomic_DNA"/>
</dbReference>
<dbReference type="EMBL" id="AY495101">
    <property type="protein sequence ID" value="AAR92650.1"/>
    <property type="molecule type" value="Genomic_DNA"/>
</dbReference>
<dbReference type="EMBL" id="AY495102">
    <property type="protein sequence ID" value="AAR92663.1"/>
    <property type="molecule type" value="Genomic_DNA"/>
</dbReference>
<dbReference type="EMBL" id="AY495103">
    <property type="protein sequence ID" value="AAR92676.1"/>
    <property type="molecule type" value="Genomic_DNA"/>
</dbReference>
<dbReference type="EMBL" id="AY495104">
    <property type="protein sequence ID" value="AAR92689.1"/>
    <property type="molecule type" value="Genomic_DNA"/>
</dbReference>
<dbReference type="EMBL" id="AY495105">
    <property type="protein sequence ID" value="AAR92702.1"/>
    <property type="molecule type" value="Genomic_DNA"/>
</dbReference>
<dbReference type="EMBL" id="AY495106">
    <property type="protein sequence ID" value="AAR92715.1"/>
    <property type="molecule type" value="Genomic_DNA"/>
</dbReference>
<dbReference type="EMBL" id="AY495107">
    <property type="protein sequence ID" value="AAR92728.1"/>
    <property type="molecule type" value="Genomic_DNA"/>
</dbReference>
<dbReference type="EMBL" id="AY495109">
    <property type="protein sequence ID" value="AAR92754.1"/>
    <property type="molecule type" value="Genomic_DNA"/>
</dbReference>
<dbReference type="EMBL" id="AY495110">
    <property type="protein sequence ID" value="AAR92767.1"/>
    <property type="molecule type" value="Genomic_DNA"/>
</dbReference>
<dbReference type="EMBL" id="AY495112">
    <property type="protein sequence ID" value="AAR92793.1"/>
    <property type="molecule type" value="Genomic_DNA"/>
</dbReference>
<dbReference type="EMBL" id="AY495113">
    <property type="protein sequence ID" value="AAR92806.1"/>
    <property type="molecule type" value="Genomic_DNA"/>
</dbReference>
<dbReference type="EMBL" id="AY495114">
    <property type="protein sequence ID" value="AAR92819.1"/>
    <property type="molecule type" value="Genomic_DNA"/>
</dbReference>
<dbReference type="EMBL" id="AY495115">
    <property type="protein sequence ID" value="AAR92832.1"/>
    <property type="molecule type" value="Genomic_DNA"/>
</dbReference>
<dbReference type="EMBL" id="AY495116">
    <property type="protein sequence ID" value="AAR92845.1"/>
    <property type="molecule type" value="Genomic_DNA"/>
</dbReference>
<dbReference type="EMBL" id="AY495117">
    <property type="protein sequence ID" value="AAR92858.1"/>
    <property type="molecule type" value="Genomic_DNA"/>
</dbReference>
<dbReference type="EMBL" id="AY495118">
    <property type="protein sequence ID" value="AAR92871.1"/>
    <property type="molecule type" value="Genomic_DNA"/>
</dbReference>
<dbReference type="EMBL" id="AY495119">
    <property type="protein sequence ID" value="AAR92884.1"/>
    <property type="molecule type" value="Genomic_DNA"/>
</dbReference>
<dbReference type="EMBL" id="AY495120">
    <property type="protein sequence ID" value="AAR92897.1"/>
    <property type="molecule type" value="Genomic_DNA"/>
</dbReference>
<dbReference type="EMBL" id="AY495121">
    <property type="protein sequence ID" value="AAR92910.1"/>
    <property type="molecule type" value="Genomic_DNA"/>
</dbReference>
<dbReference type="EMBL" id="AY495122">
    <property type="protein sequence ID" value="AAR92923.1"/>
    <property type="molecule type" value="Genomic_DNA"/>
</dbReference>
<dbReference type="EMBL" id="AY495124">
    <property type="protein sequence ID" value="AAR92949.1"/>
    <property type="molecule type" value="Genomic_DNA"/>
</dbReference>
<dbReference type="EMBL" id="AY495125">
    <property type="protein sequence ID" value="AAR92962.1"/>
    <property type="molecule type" value="Genomic_DNA"/>
</dbReference>
<dbReference type="EMBL" id="AY495126">
    <property type="protein sequence ID" value="AAR92975.1"/>
    <property type="molecule type" value="Genomic_DNA"/>
</dbReference>
<dbReference type="EMBL" id="AY495128">
    <property type="protein sequence ID" value="AAR93001.1"/>
    <property type="molecule type" value="Genomic_DNA"/>
</dbReference>
<dbReference type="EMBL" id="AY495129">
    <property type="protein sequence ID" value="AAR93014.1"/>
    <property type="molecule type" value="Genomic_DNA"/>
</dbReference>
<dbReference type="EMBL" id="AY495130">
    <property type="protein sequence ID" value="AAR93027.1"/>
    <property type="molecule type" value="Genomic_DNA"/>
</dbReference>
<dbReference type="EMBL" id="AY495131">
    <property type="protein sequence ID" value="AAR93040.1"/>
    <property type="molecule type" value="Genomic_DNA"/>
</dbReference>
<dbReference type="EMBL" id="AY495132">
    <property type="protein sequence ID" value="AAR93053.1"/>
    <property type="molecule type" value="Genomic_DNA"/>
</dbReference>
<dbReference type="EMBL" id="AY495133">
    <property type="protein sequence ID" value="AAR93066.1"/>
    <property type="molecule type" value="Genomic_DNA"/>
</dbReference>
<dbReference type="EMBL" id="AY495134">
    <property type="protein sequence ID" value="AAR93079.1"/>
    <property type="molecule type" value="Genomic_DNA"/>
</dbReference>
<dbReference type="EMBL" id="AY495135">
    <property type="protein sequence ID" value="AAR93092.1"/>
    <property type="molecule type" value="Genomic_DNA"/>
</dbReference>
<dbReference type="EMBL" id="AY495136">
    <property type="protein sequence ID" value="AAR93105.1"/>
    <property type="molecule type" value="Genomic_DNA"/>
</dbReference>
<dbReference type="EMBL" id="AY495137">
    <property type="protein sequence ID" value="AAR93118.1"/>
    <property type="molecule type" value="Genomic_DNA"/>
</dbReference>
<dbReference type="EMBL" id="AY495138">
    <property type="protein sequence ID" value="AAR93131.1"/>
    <property type="molecule type" value="Genomic_DNA"/>
</dbReference>
<dbReference type="EMBL" id="AY495139">
    <property type="protein sequence ID" value="AAR93144.1"/>
    <property type="molecule type" value="Genomic_DNA"/>
</dbReference>
<dbReference type="EMBL" id="AY495140">
    <property type="protein sequence ID" value="AAR93157.1"/>
    <property type="molecule type" value="Genomic_DNA"/>
</dbReference>
<dbReference type="EMBL" id="AY495141">
    <property type="protein sequence ID" value="AAR93170.1"/>
    <property type="molecule type" value="Genomic_DNA"/>
</dbReference>
<dbReference type="EMBL" id="AY495142">
    <property type="protein sequence ID" value="AAR93183.1"/>
    <property type="molecule type" value="Genomic_DNA"/>
</dbReference>
<dbReference type="EMBL" id="AY495143">
    <property type="protein sequence ID" value="AAR93196.1"/>
    <property type="molecule type" value="Genomic_DNA"/>
</dbReference>
<dbReference type="EMBL" id="AY495144">
    <property type="protein sequence ID" value="AAR93209.1"/>
    <property type="molecule type" value="Genomic_DNA"/>
</dbReference>
<dbReference type="EMBL" id="AY495145">
    <property type="protein sequence ID" value="AAR93222.1"/>
    <property type="molecule type" value="Genomic_DNA"/>
</dbReference>
<dbReference type="EMBL" id="AY495146">
    <property type="protein sequence ID" value="AAR93235.1"/>
    <property type="molecule type" value="Genomic_DNA"/>
</dbReference>
<dbReference type="EMBL" id="AY495147">
    <property type="protein sequence ID" value="AAR93248.1"/>
    <property type="molecule type" value="Genomic_DNA"/>
</dbReference>
<dbReference type="EMBL" id="AY495148">
    <property type="protein sequence ID" value="AAR93261.1"/>
    <property type="molecule type" value="Genomic_DNA"/>
</dbReference>
<dbReference type="EMBL" id="AY495149">
    <property type="protein sequence ID" value="AAR93274.1"/>
    <property type="molecule type" value="Genomic_DNA"/>
</dbReference>
<dbReference type="EMBL" id="AY495150">
    <property type="protein sequence ID" value="AAR93287.1"/>
    <property type="molecule type" value="Genomic_DNA"/>
</dbReference>
<dbReference type="EMBL" id="AY495151">
    <property type="protein sequence ID" value="AAR93300.1"/>
    <property type="molecule type" value="Genomic_DNA"/>
</dbReference>
<dbReference type="EMBL" id="AY495152">
    <property type="protein sequence ID" value="AAR93313.1"/>
    <property type="molecule type" value="Genomic_DNA"/>
</dbReference>
<dbReference type="EMBL" id="AY495153">
    <property type="protein sequence ID" value="AAR93326.1"/>
    <property type="molecule type" value="Genomic_DNA"/>
</dbReference>
<dbReference type="EMBL" id="AY495154">
    <property type="protein sequence ID" value="AAR93339.1"/>
    <property type="molecule type" value="Genomic_DNA"/>
</dbReference>
<dbReference type="EMBL" id="AY495155">
    <property type="protein sequence ID" value="AAR93352.1"/>
    <property type="molecule type" value="Genomic_DNA"/>
</dbReference>
<dbReference type="EMBL" id="AY495156">
    <property type="protein sequence ID" value="AAR93365.1"/>
    <property type="molecule type" value="Genomic_DNA"/>
</dbReference>
<dbReference type="EMBL" id="AY495157">
    <property type="protein sequence ID" value="AAR93378.1"/>
    <property type="molecule type" value="Genomic_DNA"/>
</dbReference>
<dbReference type="EMBL" id="AY495158">
    <property type="protein sequence ID" value="AAR93391.1"/>
    <property type="molecule type" value="Genomic_DNA"/>
</dbReference>
<dbReference type="EMBL" id="AY495159">
    <property type="protein sequence ID" value="AAR93404.1"/>
    <property type="molecule type" value="Genomic_DNA"/>
</dbReference>
<dbReference type="EMBL" id="AY495160">
    <property type="protein sequence ID" value="AAR93417.1"/>
    <property type="molecule type" value="Genomic_DNA"/>
</dbReference>
<dbReference type="EMBL" id="AY495161">
    <property type="protein sequence ID" value="AAR93430.1"/>
    <property type="molecule type" value="Genomic_DNA"/>
</dbReference>
<dbReference type="EMBL" id="AY495162">
    <property type="protein sequence ID" value="AAR93443.1"/>
    <property type="molecule type" value="Genomic_DNA"/>
</dbReference>
<dbReference type="EMBL" id="AY495163">
    <property type="protein sequence ID" value="AAR93456.1"/>
    <property type="molecule type" value="Genomic_DNA"/>
</dbReference>
<dbReference type="EMBL" id="AY495164">
    <property type="protein sequence ID" value="AAR93469.1"/>
    <property type="molecule type" value="Genomic_DNA"/>
</dbReference>
<dbReference type="EMBL" id="AY495165">
    <property type="protein sequence ID" value="AAR93482.1"/>
    <property type="molecule type" value="Genomic_DNA"/>
</dbReference>
<dbReference type="EMBL" id="AY495166">
    <property type="protein sequence ID" value="AAR93495.1"/>
    <property type="molecule type" value="Genomic_DNA"/>
</dbReference>
<dbReference type="EMBL" id="AY495167">
    <property type="protein sequence ID" value="AAR93508.1"/>
    <property type="molecule type" value="Genomic_DNA"/>
</dbReference>
<dbReference type="EMBL" id="AY495168">
    <property type="protein sequence ID" value="AAR93521.1"/>
    <property type="molecule type" value="Genomic_DNA"/>
</dbReference>
<dbReference type="EMBL" id="AY495169">
    <property type="protein sequence ID" value="AAR93534.1"/>
    <property type="molecule type" value="Genomic_DNA"/>
</dbReference>
<dbReference type="EMBL" id="AY495170">
    <property type="protein sequence ID" value="AAR93547.1"/>
    <property type="molecule type" value="Genomic_DNA"/>
</dbReference>
<dbReference type="EMBL" id="AY495171">
    <property type="protein sequence ID" value="AAR93560.1"/>
    <property type="molecule type" value="Genomic_DNA"/>
</dbReference>
<dbReference type="EMBL" id="AY495172">
    <property type="protein sequence ID" value="AAR93573.1"/>
    <property type="molecule type" value="Genomic_DNA"/>
</dbReference>
<dbReference type="EMBL" id="AY495173">
    <property type="protein sequence ID" value="AAR93586.1"/>
    <property type="molecule type" value="Genomic_DNA"/>
</dbReference>
<dbReference type="EMBL" id="AY495174">
    <property type="protein sequence ID" value="AAR93599.1"/>
    <property type="molecule type" value="Genomic_DNA"/>
</dbReference>
<dbReference type="EMBL" id="AY495175">
    <property type="protein sequence ID" value="AAR93612.1"/>
    <property type="molecule type" value="Genomic_DNA"/>
</dbReference>
<dbReference type="EMBL" id="AY495176">
    <property type="protein sequence ID" value="AAR93625.1"/>
    <property type="molecule type" value="Genomic_DNA"/>
</dbReference>
<dbReference type="EMBL" id="AY495177">
    <property type="protein sequence ID" value="AAR93638.1"/>
    <property type="molecule type" value="Genomic_DNA"/>
</dbReference>
<dbReference type="EMBL" id="AY495180">
    <property type="protein sequence ID" value="AAR93677.1"/>
    <property type="molecule type" value="Genomic_DNA"/>
</dbReference>
<dbReference type="EMBL" id="AY495185">
    <property type="protein sequence ID" value="AAR93742.1"/>
    <property type="molecule type" value="Genomic_DNA"/>
</dbReference>
<dbReference type="EMBL" id="AY495187">
    <property type="protein sequence ID" value="AAR93768.1"/>
    <property type="molecule type" value="Genomic_DNA"/>
</dbReference>
<dbReference type="EMBL" id="AY495188">
    <property type="protein sequence ID" value="AAR93781.1"/>
    <property type="molecule type" value="Genomic_DNA"/>
</dbReference>
<dbReference type="EMBL" id="AY495189">
    <property type="protein sequence ID" value="AAR93794.1"/>
    <property type="molecule type" value="Genomic_DNA"/>
</dbReference>
<dbReference type="EMBL" id="AY495190">
    <property type="protein sequence ID" value="AAR93807.1"/>
    <property type="molecule type" value="Genomic_DNA"/>
</dbReference>
<dbReference type="EMBL" id="AY495191">
    <property type="protein sequence ID" value="AAR93820.1"/>
    <property type="molecule type" value="Genomic_DNA"/>
</dbReference>
<dbReference type="EMBL" id="AY495192">
    <property type="protein sequence ID" value="AAR93833.1"/>
    <property type="molecule type" value="Genomic_DNA"/>
</dbReference>
<dbReference type="EMBL" id="AY495193">
    <property type="protein sequence ID" value="AAR93846.1"/>
    <property type="molecule type" value="Genomic_DNA"/>
</dbReference>
<dbReference type="EMBL" id="AY495194">
    <property type="protein sequence ID" value="AAR93859.1"/>
    <property type="molecule type" value="Genomic_DNA"/>
</dbReference>
<dbReference type="EMBL" id="AY495195">
    <property type="protein sequence ID" value="AAR93872.1"/>
    <property type="molecule type" value="Genomic_DNA"/>
</dbReference>
<dbReference type="EMBL" id="AY495196">
    <property type="protein sequence ID" value="AAR93885.1"/>
    <property type="molecule type" value="Genomic_DNA"/>
</dbReference>
<dbReference type="EMBL" id="AY495197">
    <property type="protein sequence ID" value="AAR93898.1"/>
    <property type="molecule type" value="Genomic_DNA"/>
</dbReference>
<dbReference type="EMBL" id="AY495198">
    <property type="protein sequence ID" value="AAR93911.1"/>
    <property type="molecule type" value="Genomic_DNA"/>
</dbReference>
<dbReference type="EMBL" id="AY495199">
    <property type="protein sequence ID" value="AAR93924.1"/>
    <property type="molecule type" value="Genomic_DNA"/>
</dbReference>
<dbReference type="EMBL" id="AY495200">
    <property type="protein sequence ID" value="AAR93937.1"/>
    <property type="molecule type" value="Genomic_DNA"/>
</dbReference>
<dbReference type="EMBL" id="AY495201">
    <property type="protein sequence ID" value="AAR93950.1"/>
    <property type="molecule type" value="Genomic_DNA"/>
</dbReference>
<dbReference type="EMBL" id="AY495202">
    <property type="protein sequence ID" value="AAR93963.1"/>
    <property type="molecule type" value="Genomic_DNA"/>
</dbReference>
<dbReference type="EMBL" id="AY495203">
    <property type="protein sequence ID" value="AAR93976.1"/>
    <property type="molecule type" value="Genomic_DNA"/>
</dbReference>
<dbReference type="EMBL" id="AY495204">
    <property type="protein sequence ID" value="AAR93989.1"/>
    <property type="molecule type" value="Genomic_DNA"/>
</dbReference>
<dbReference type="EMBL" id="AY495205">
    <property type="protein sequence ID" value="AAR94002.1"/>
    <property type="molecule type" value="Genomic_DNA"/>
</dbReference>
<dbReference type="EMBL" id="AY495206">
    <property type="protein sequence ID" value="AAR94015.1"/>
    <property type="molecule type" value="Genomic_DNA"/>
</dbReference>
<dbReference type="EMBL" id="AY495207">
    <property type="protein sequence ID" value="AAR94028.1"/>
    <property type="molecule type" value="Genomic_DNA"/>
</dbReference>
<dbReference type="EMBL" id="AY495208">
    <property type="protein sequence ID" value="AAR94041.1"/>
    <property type="molecule type" value="Genomic_DNA"/>
</dbReference>
<dbReference type="EMBL" id="AY495210">
    <property type="protein sequence ID" value="AAR94067.1"/>
    <property type="molecule type" value="Genomic_DNA"/>
</dbReference>
<dbReference type="EMBL" id="AY495211">
    <property type="protein sequence ID" value="AAR94080.1"/>
    <property type="molecule type" value="Genomic_DNA"/>
</dbReference>
<dbReference type="EMBL" id="AY495212">
    <property type="protein sequence ID" value="AAR94093.1"/>
    <property type="molecule type" value="Genomic_DNA"/>
</dbReference>
<dbReference type="EMBL" id="AY495213">
    <property type="protein sequence ID" value="AAR94106.1"/>
    <property type="molecule type" value="Genomic_DNA"/>
</dbReference>
<dbReference type="EMBL" id="AY495214">
    <property type="protein sequence ID" value="AAR94119.1"/>
    <property type="molecule type" value="Genomic_DNA"/>
</dbReference>
<dbReference type="EMBL" id="AY495216">
    <property type="protein sequence ID" value="AAR94145.1"/>
    <property type="molecule type" value="Genomic_DNA"/>
</dbReference>
<dbReference type="EMBL" id="AY495217">
    <property type="protein sequence ID" value="AAR94158.1"/>
    <property type="molecule type" value="Genomic_DNA"/>
</dbReference>
<dbReference type="EMBL" id="AY495218">
    <property type="protein sequence ID" value="AAR94171.1"/>
    <property type="molecule type" value="Genomic_DNA"/>
</dbReference>
<dbReference type="EMBL" id="AY495219">
    <property type="protein sequence ID" value="AAR94184.1"/>
    <property type="molecule type" value="Genomic_DNA"/>
</dbReference>
<dbReference type="EMBL" id="AY495220">
    <property type="protein sequence ID" value="AAR94197.1"/>
    <property type="molecule type" value="Genomic_DNA"/>
</dbReference>
<dbReference type="EMBL" id="AY495221">
    <property type="protein sequence ID" value="AAR94210.1"/>
    <property type="molecule type" value="Genomic_DNA"/>
</dbReference>
<dbReference type="EMBL" id="AY495222">
    <property type="protein sequence ID" value="AAR94223.1"/>
    <property type="molecule type" value="Genomic_DNA"/>
</dbReference>
<dbReference type="EMBL" id="AY495223">
    <property type="protein sequence ID" value="AAR94236.1"/>
    <property type="molecule type" value="Genomic_DNA"/>
</dbReference>
<dbReference type="EMBL" id="AY495224">
    <property type="protein sequence ID" value="AAR94249.1"/>
    <property type="molecule type" value="Genomic_DNA"/>
</dbReference>
<dbReference type="EMBL" id="AY495225">
    <property type="protein sequence ID" value="AAR94262.1"/>
    <property type="molecule type" value="Genomic_DNA"/>
</dbReference>
<dbReference type="EMBL" id="AY495226">
    <property type="protein sequence ID" value="AAR94275.1"/>
    <property type="molecule type" value="Genomic_DNA"/>
</dbReference>
<dbReference type="EMBL" id="AY495227">
    <property type="protein sequence ID" value="AAR94288.1"/>
    <property type="molecule type" value="Genomic_DNA"/>
</dbReference>
<dbReference type="EMBL" id="AY495228">
    <property type="protein sequence ID" value="AAR94301.1"/>
    <property type="molecule type" value="Genomic_DNA"/>
</dbReference>
<dbReference type="EMBL" id="AY495229">
    <property type="protein sequence ID" value="AAR94314.1"/>
    <property type="molecule type" value="Genomic_DNA"/>
</dbReference>
<dbReference type="EMBL" id="AY495230">
    <property type="protein sequence ID" value="AAR94327.1"/>
    <property type="molecule type" value="Genomic_DNA"/>
</dbReference>
<dbReference type="EMBL" id="AY495231">
    <property type="protein sequence ID" value="AAR94340.1"/>
    <property type="molecule type" value="Genomic_DNA"/>
</dbReference>
<dbReference type="EMBL" id="AY495232">
    <property type="protein sequence ID" value="AAR94353.1"/>
    <property type="molecule type" value="Genomic_DNA"/>
</dbReference>
<dbReference type="EMBL" id="AY495233">
    <property type="protein sequence ID" value="AAR94366.1"/>
    <property type="molecule type" value="Genomic_DNA"/>
</dbReference>
<dbReference type="EMBL" id="AY495234">
    <property type="protein sequence ID" value="AAR94379.1"/>
    <property type="molecule type" value="Genomic_DNA"/>
</dbReference>
<dbReference type="EMBL" id="AY495235">
    <property type="protein sequence ID" value="AAR94392.1"/>
    <property type="molecule type" value="Genomic_DNA"/>
</dbReference>
<dbReference type="EMBL" id="AY495236">
    <property type="protein sequence ID" value="AAR94405.1"/>
    <property type="molecule type" value="Genomic_DNA"/>
</dbReference>
<dbReference type="EMBL" id="AY495237">
    <property type="protein sequence ID" value="AAR94418.1"/>
    <property type="molecule type" value="Genomic_DNA"/>
</dbReference>
<dbReference type="EMBL" id="AY495238">
    <property type="protein sequence ID" value="AAR94431.1"/>
    <property type="molecule type" value="Genomic_DNA"/>
</dbReference>
<dbReference type="EMBL" id="AY495239">
    <property type="protein sequence ID" value="AAR94444.1"/>
    <property type="molecule type" value="Genomic_DNA"/>
</dbReference>
<dbReference type="EMBL" id="AY495240">
    <property type="protein sequence ID" value="AAR94457.1"/>
    <property type="molecule type" value="Genomic_DNA"/>
</dbReference>
<dbReference type="EMBL" id="AY495241">
    <property type="protein sequence ID" value="AAR94470.1"/>
    <property type="molecule type" value="Genomic_DNA"/>
</dbReference>
<dbReference type="EMBL" id="AY495242">
    <property type="protein sequence ID" value="AAR94483.1"/>
    <property type="molecule type" value="Genomic_DNA"/>
</dbReference>
<dbReference type="EMBL" id="AY495243">
    <property type="protein sequence ID" value="AAR94496.1"/>
    <property type="molecule type" value="Genomic_DNA"/>
</dbReference>
<dbReference type="EMBL" id="AY495244">
    <property type="protein sequence ID" value="AAR94509.1"/>
    <property type="molecule type" value="Genomic_DNA"/>
</dbReference>
<dbReference type="EMBL" id="AY495245">
    <property type="protein sequence ID" value="AAR94522.1"/>
    <property type="molecule type" value="Genomic_DNA"/>
</dbReference>
<dbReference type="EMBL" id="AY495246">
    <property type="protein sequence ID" value="AAR94535.1"/>
    <property type="molecule type" value="Genomic_DNA"/>
</dbReference>
<dbReference type="EMBL" id="AY495247">
    <property type="protein sequence ID" value="AAR94548.1"/>
    <property type="molecule type" value="Genomic_DNA"/>
</dbReference>
<dbReference type="EMBL" id="AY495248">
    <property type="protein sequence ID" value="AAR94561.1"/>
    <property type="molecule type" value="Genomic_DNA"/>
</dbReference>
<dbReference type="EMBL" id="AY495249">
    <property type="protein sequence ID" value="AAR94574.1"/>
    <property type="molecule type" value="Genomic_DNA"/>
</dbReference>
<dbReference type="EMBL" id="AY495250">
    <property type="protein sequence ID" value="AAR94587.1"/>
    <property type="molecule type" value="Genomic_DNA"/>
</dbReference>
<dbReference type="EMBL" id="AY495251">
    <property type="protein sequence ID" value="AAR94600.1"/>
    <property type="molecule type" value="Genomic_DNA"/>
</dbReference>
<dbReference type="EMBL" id="AY495252">
    <property type="protein sequence ID" value="AAR94613.1"/>
    <property type="molecule type" value="Genomic_DNA"/>
</dbReference>
<dbReference type="EMBL" id="AY495253">
    <property type="protein sequence ID" value="AAR94626.1"/>
    <property type="molecule type" value="Genomic_DNA"/>
</dbReference>
<dbReference type="EMBL" id="AY495254">
    <property type="protein sequence ID" value="AAR94639.1"/>
    <property type="molecule type" value="Genomic_DNA"/>
</dbReference>
<dbReference type="EMBL" id="AY495255">
    <property type="protein sequence ID" value="AAR94652.1"/>
    <property type="molecule type" value="Genomic_DNA"/>
</dbReference>
<dbReference type="EMBL" id="AY495256">
    <property type="protein sequence ID" value="AAR94665.1"/>
    <property type="molecule type" value="Genomic_DNA"/>
</dbReference>
<dbReference type="EMBL" id="AY495257">
    <property type="protein sequence ID" value="AAR94678.1"/>
    <property type="molecule type" value="Genomic_DNA"/>
</dbReference>
<dbReference type="EMBL" id="AY495258">
    <property type="protein sequence ID" value="AAR94691.1"/>
    <property type="molecule type" value="Genomic_DNA"/>
</dbReference>
<dbReference type="EMBL" id="AY495259">
    <property type="protein sequence ID" value="AAR94704.1"/>
    <property type="molecule type" value="Genomic_DNA"/>
</dbReference>
<dbReference type="EMBL" id="AY495261">
    <property type="protein sequence ID" value="AAR94730.1"/>
    <property type="molecule type" value="Genomic_DNA"/>
</dbReference>
<dbReference type="EMBL" id="AY495262">
    <property type="protein sequence ID" value="AAR94743.1"/>
    <property type="molecule type" value="Genomic_DNA"/>
</dbReference>
<dbReference type="EMBL" id="AY495263">
    <property type="protein sequence ID" value="AAR94756.1"/>
    <property type="molecule type" value="Genomic_DNA"/>
</dbReference>
<dbReference type="EMBL" id="AY495264">
    <property type="protein sequence ID" value="AAR94769.1"/>
    <property type="molecule type" value="Genomic_DNA"/>
</dbReference>
<dbReference type="EMBL" id="AY495266">
    <property type="protein sequence ID" value="AAR94795.1"/>
    <property type="molecule type" value="Genomic_DNA"/>
</dbReference>
<dbReference type="EMBL" id="AY495267">
    <property type="protein sequence ID" value="AAR94808.1"/>
    <property type="molecule type" value="Genomic_DNA"/>
</dbReference>
<dbReference type="EMBL" id="AY495268">
    <property type="protein sequence ID" value="AAR94821.1"/>
    <property type="molecule type" value="Genomic_DNA"/>
</dbReference>
<dbReference type="EMBL" id="AY495269">
    <property type="protein sequence ID" value="AAR94834.1"/>
    <property type="molecule type" value="Genomic_DNA"/>
</dbReference>
<dbReference type="EMBL" id="AY495270">
    <property type="protein sequence ID" value="AAR94847.1"/>
    <property type="molecule type" value="Genomic_DNA"/>
</dbReference>
<dbReference type="EMBL" id="AY495271">
    <property type="protein sequence ID" value="AAR94860.1"/>
    <property type="molecule type" value="Genomic_DNA"/>
</dbReference>
<dbReference type="EMBL" id="AY495272">
    <property type="protein sequence ID" value="AAR94873.1"/>
    <property type="molecule type" value="Genomic_DNA"/>
</dbReference>
<dbReference type="EMBL" id="AY495273">
    <property type="protein sequence ID" value="AAR94886.1"/>
    <property type="molecule type" value="Genomic_DNA"/>
</dbReference>
<dbReference type="EMBL" id="AY495274">
    <property type="protein sequence ID" value="AAR94899.1"/>
    <property type="molecule type" value="Genomic_DNA"/>
</dbReference>
<dbReference type="EMBL" id="AY495275">
    <property type="protein sequence ID" value="AAR94912.1"/>
    <property type="molecule type" value="Genomic_DNA"/>
</dbReference>
<dbReference type="EMBL" id="AY495276">
    <property type="protein sequence ID" value="AAR94925.1"/>
    <property type="molecule type" value="Genomic_DNA"/>
</dbReference>
<dbReference type="EMBL" id="AY495277">
    <property type="protein sequence ID" value="AAR94938.1"/>
    <property type="molecule type" value="Genomic_DNA"/>
</dbReference>
<dbReference type="EMBL" id="AY495278">
    <property type="protein sequence ID" value="AAR94951.1"/>
    <property type="molecule type" value="Genomic_DNA"/>
</dbReference>
<dbReference type="EMBL" id="AY495279">
    <property type="protein sequence ID" value="AAR94964.1"/>
    <property type="molecule type" value="Genomic_DNA"/>
</dbReference>
<dbReference type="EMBL" id="AY495280">
    <property type="protein sequence ID" value="AAR94977.1"/>
    <property type="molecule type" value="Genomic_DNA"/>
</dbReference>
<dbReference type="EMBL" id="AY495281">
    <property type="protein sequence ID" value="AAR94990.1"/>
    <property type="molecule type" value="Genomic_DNA"/>
</dbReference>
<dbReference type="EMBL" id="AY495282">
    <property type="protein sequence ID" value="AAR95003.1"/>
    <property type="molecule type" value="Genomic_DNA"/>
</dbReference>
<dbReference type="EMBL" id="AY495283">
    <property type="protein sequence ID" value="AAR95016.1"/>
    <property type="molecule type" value="Genomic_DNA"/>
</dbReference>
<dbReference type="EMBL" id="AY495284">
    <property type="protein sequence ID" value="AAR95029.1"/>
    <property type="molecule type" value="Genomic_DNA"/>
</dbReference>
<dbReference type="EMBL" id="AY495285">
    <property type="protein sequence ID" value="AAR95042.1"/>
    <property type="molecule type" value="Genomic_DNA"/>
</dbReference>
<dbReference type="EMBL" id="AY495286">
    <property type="protein sequence ID" value="AAR95055.1"/>
    <property type="molecule type" value="Genomic_DNA"/>
</dbReference>
<dbReference type="EMBL" id="AY495287">
    <property type="protein sequence ID" value="AAR95068.1"/>
    <property type="molecule type" value="Genomic_DNA"/>
</dbReference>
<dbReference type="EMBL" id="AY495288">
    <property type="protein sequence ID" value="AAR95081.1"/>
    <property type="molecule type" value="Genomic_DNA"/>
</dbReference>
<dbReference type="EMBL" id="AY495289">
    <property type="protein sequence ID" value="AAR95094.1"/>
    <property type="molecule type" value="Genomic_DNA"/>
</dbReference>
<dbReference type="EMBL" id="AY495290">
    <property type="protein sequence ID" value="AAR95107.1"/>
    <property type="molecule type" value="Genomic_DNA"/>
</dbReference>
<dbReference type="EMBL" id="AY495291">
    <property type="protein sequence ID" value="AAR95120.1"/>
    <property type="molecule type" value="Genomic_DNA"/>
</dbReference>
<dbReference type="EMBL" id="AY495292">
    <property type="protein sequence ID" value="AAR95133.1"/>
    <property type="molecule type" value="Genomic_DNA"/>
</dbReference>
<dbReference type="EMBL" id="AY495293">
    <property type="protein sequence ID" value="AAR95146.1"/>
    <property type="molecule type" value="Genomic_DNA"/>
</dbReference>
<dbReference type="EMBL" id="AY495294">
    <property type="protein sequence ID" value="AAR95159.1"/>
    <property type="molecule type" value="Genomic_DNA"/>
</dbReference>
<dbReference type="EMBL" id="AY495295">
    <property type="protein sequence ID" value="AAR95172.1"/>
    <property type="molecule type" value="Genomic_DNA"/>
</dbReference>
<dbReference type="EMBL" id="AY495296">
    <property type="protein sequence ID" value="AAR95185.1"/>
    <property type="molecule type" value="Genomic_DNA"/>
</dbReference>
<dbReference type="EMBL" id="AY495297">
    <property type="protein sequence ID" value="AAR95198.1"/>
    <property type="molecule type" value="Genomic_DNA"/>
</dbReference>
<dbReference type="EMBL" id="AY495298">
    <property type="protein sequence ID" value="AAR95211.1"/>
    <property type="molecule type" value="Genomic_DNA"/>
</dbReference>
<dbReference type="EMBL" id="AY495299">
    <property type="protein sequence ID" value="AAR95224.1"/>
    <property type="molecule type" value="Genomic_DNA"/>
</dbReference>
<dbReference type="EMBL" id="AY495300">
    <property type="protein sequence ID" value="AAR95237.1"/>
    <property type="molecule type" value="Genomic_DNA"/>
</dbReference>
<dbReference type="EMBL" id="AY495301">
    <property type="protein sequence ID" value="AAR95250.1"/>
    <property type="molecule type" value="Genomic_DNA"/>
</dbReference>
<dbReference type="EMBL" id="AY495302">
    <property type="protein sequence ID" value="AAR95263.1"/>
    <property type="molecule type" value="Genomic_DNA"/>
</dbReference>
<dbReference type="EMBL" id="AY495303">
    <property type="protein sequence ID" value="AAR95276.1"/>
    <property type="molecule type" value="Genomic_DNA"/>
</dbReference>
<dbReference type="EMBL" id="AY495304">
    <property type="protein sequence ID" value="AAR95289.1"/>
    <property type="molecule type" value="Genomic_DNA"/>
</dbReference>
<dbReference type="EMBL" id="AY495305">
    <property type="protein sequence ID" value="AAR95302.1"/>
    <property type="molecule type" value="Genomic_DNA"/>
</dbReference>
<dbReference type="EMBL" id="AY495306">
    <property type="protein sequence ID" value="AAR95315.1"/>
    <property type="molecule type" value="Genomic_DNA"/>
</dbReference>
<dbReference type="EMBL" id="AY495307">
    <property type="protein sequence ID" value="AAR95328.1"/>
    <property type="molecule type" value="Genomic_DNA"/>
</dbReference>
<dbReference type="EMBL" id="AY495308">
    <property type="protein sequence ID" value="AAR95341.1"/>
    <property type="molecule type" value="Genomic_DNA"/>
</dbReference>
<dbReference type="EMBL" id="AY495310">
    <property type="protein sequence ID" value="AAR95367.1"/>
    <property type="molecule type" value="Genomic_DNA"/>
</dbReference>
<dbReference type="EMBL" id="AY495311">
    <property type="protein sequence ID" value="AAR95380.1"/>
    <property type="molecule type" value="Genomic_DNA"/>
</dbReference>
<dbReference type="EMBL" id="AY495312">
    <property type="protein sequence ID" value="AAR95393.1"/>
    <property type="molecule type" value="Genomic_DNA"/>
</dbReference>
<dbReference type="EMBL" id="AY495313">
    <property type="protein sequence ID" value="AAR95406.1"/>
    <property type="molecule type" value="Genomic_DNA"/>
</dbReference>
<dbReference type="EMBL" id="AY495314">
    <property type="protein sequence ID" value="AAR95419.1"/>
    <property type="molecule type" value="Genomic_DNA"/>
</dbReference>
<dbReference type="EMBL" id="AY495315">
    <property type="protein sequence ID" value="AAR95432.1"/>
    <property type="molecule type" value="Genomic_DNA"/>
</dbReference>
<dbReference type="EMBL" id="AY495316">
    <property type="protein sequence ID" value="AAR95445.1"/>
    <property type="molecule type" value="Genomic_DNA"/>
</dbReference>
<dbReference type="EMBL" id="AY495317">
    <property type="protein sequence ID" value="AAR95458.1"/>
    <property type="molecule type" value="Genomic_DNA"/>
</dbReference>
<dbReference type="EMBL" id="AY495318">
    <property type="protein sequence ID" value="AAR95471.1"/>
    <property type="molecule type" value="Genomic_DNA"/>
</dbReference>
<dbReference type="EMBL" id="AY495319">
    <property type="protein sequence ID" value="AAR95484.1"/>
    <property type="molecule type" value="Genomic_DNA"/>
</dbReference>
<dbReference type="EMBL" id="AY495320">
    <property type="protein sequence ID" value="AAR95497.1"/>
    <property type="molecule type" value="Genomic_DNA"/>
</dbReference>
<dbReference type="EMBL" id="AY495321">
    <property type="protein sequence ID" value="AAR95510.1"/>
    <property type="molecule type" value="Genomic_DNA"/>
</dbReference>
<dbReference type="EMBL" id="AY495322">
    <property type="protein sequence ID" value="AAR95523.1"/>
    <property type="molecule type" value="Genomic_DNA"/>
</dbReference>
<dbReference type="EMBL" id="AY495323">
    <property type="protein sequence ID" value="AAR95536.1"/>
    <property type="molecule type" value="Genomic_DNA"/>
</dbReference>
<dbReference type="EMBL" id="AY495324">
    <property type="protein sequence ID" value="AAR95549.1"/>
    <property type="molecule type" value="Genomic_DNA"/>
</dbReference>
<dbReference type="EMBL" id="AY495325">
    <property type="protein sequence ID" value="AAR95562.1"/>
    <property type="molecule type" value="Genomic_DNA"/>
</dbReference>
<dbReference type="EMBL" id="AY495326">
    <property type="protein sequence ID" value="AAR95575.1"/>
    <property type="molecule type" value="Genomic_DNA"/>
</dbReference>
<dbReference type="EMBL" id="AY495327">
    <property type="protein sequence ID" value="AAR95588.1"/>
    <property type="molecule type" value="Genomic_DNA"/>
</dbReference>
<dbReference type="EMBL" id="AY495328">
    <property type="protein sequence ID" value="AAR95601.1"/>
    <property type="molecule type" value="Genomic_DNA"/>
</dbReference>
<dbReference type="EMBL" id="AY495329">
    <property type="protein sequence ID" value="AAR95614.1"/>
    <property type="molecule type" value="Genomic_DNA"/>
</dbReference>
<dbReference type="EMBL" id="AY495330">
    <property type="protein sequence ID" value="AAR95627.1"/>
    <property type="molecule type" value="Genomic_DNA"/>
</dbReference>
<dbReference type="PIR" id="A00455">
    <property type="entry name" value="DEHUN6"/>
</dbReference>
<dbReference type="RefSeq" id="YP_003024037.1">
    <property type="nucleotide sequence ID" value="NC_012920.1"/>
</dbReference>
<dbReference type="PDB" id="5XTC">
    <property type="method" value="EM"/>
    <property type="resolution" value="3.70 A"/>
    <property type="chains" value="m=1-174"/>
</dbReference>
<dbReference type="PDB" id="5XTD">
    <property type="method" value="EM"/>
    <property type="resolution" value="3.70 A"/>
    <property type="chains" value="m=1-174"/>
</dbReference>
<dbReference type="PDBsum" id="5XTC"/>
<dbReference type="PDBsum" id="5XTD"/>
<dbReference type="SMR" id="P03923"/>
<dbReference type="BioGRID" id="110637">
    <property type="interactions" value="7"/>
</dbReference>
<dbReference type="ComplexPortal" id="CPX-577">
    <property type="entry name" value="Mitochondrial respiratory chain complex I"/>
</dbReference>
<dbReference type="CORUM" id="P03923"/>
<dbReference type="FunCoup" id="P03923">
    <property type="interactions" value="332"/>
</dbReference>
<dbReference type="IntAct" id="P03923">
    <property type="interactions" value="6"/>
</dbReference>
<dbReference type="MINT" id="P03923"/>
<dbReference type="STRING" id="9606.ENSP00000354665"/>
<dbReference type="BindingDB" id="P03923"/>
<dbReference type="ChEMBL" id="CHEMBL2363065"/>
<dbReference type="DrugBank" id="DB00157">
    <property type="generic name" value="NADH"/>
</dbReference>
<dbReference type="DrugCentral" id="P03923"/>
<dbReference type="SwissPalm" id="P03923"/>
<dbReference type="BioMuta" id="MT-ND6"/>
<dbReference type="DMDM" id="6648060"/>
<dbReference type="jPOST" id="P03923"/>
<dbReference type="MassIVE" id="P03923"/>
<dbReference type="PaxDb" id="9606-ENSP00000354665"/>
<dbReference type="PeptideAtlas" id="P03923"/>
<dbReference type="ProteomicsDB" id="51617"/>
<dbReference type="TopDownProteomics" id="P03923"/>
<dbReference type="Antibodypedia" id="35364">
    <property type="antibodies" value="87 antibodies from 21 providers"/>
</dbReference>
<dbReference type="DNASU" id="4541"/>
<dbReference type="Ensembl" id="ENST00000361681.2">
    <property type="protein sequence ID" value="ENSP00000354665.2"/>
    <property type="gene ID" value="ENSG00000198695.2"/>
</dbReference>
<dbReference type="GeneID" id="4541"/>
<dbReference type="KEGG" id="hsa:4541"/>
<dbReference type="AGR" id="HGNC:7462"/>
<dbReference type="CTD" id="4541"/>
<dbReference type="DisGeNET" id="4541"/>
<dbReference type="GeneCards" id="MT-ND6"/>
<dbReference type="GeneReviews" id="MT-ND6"/>
<dbReference type="HGNC" id="HGNC:7462">
    <property type="gene designation" value="MT-ND6"/>
</dbReference>
<dbReference type="HPA" id="ENSG00000198695">
    <property type="expression patterns" value="Tissue enhanced (heart muscle, skeletal muscle)"/>
</dbReference>
<dbReference type="MalaCards" id="MT-ND6"/>
<dbReference type="MIM" id="256000">
    <property type="type" value="phenotype"/>
</dbReference>
<dbReference type="MIM" id="500001">
    <property type="type" value="phenotype"/>
</dbReference>
<dbReference type="MIM" id="516006">
    <property type="type" value="gene"/>
</dbReference>
<dbReference type="MIM" id="535000">
    <property type="type" value="phenotype"/>
</dbReference>
<dbReference type="MIM" id="540000">
    <property type="type" value="phenotype"/>
</dbReference>
<dbReference type="neXtProt" id="NX_P03923"/>
<dbReference type="OpenTargets" id="ENSG00000198695"/>
<dbReference type="Orphanet" id="104">
    <property type="disease" value="Leber hereditary optic neuropathy"/>
</dbReference>
<dbReference type="Orphanet" id="99718">
    <property type="disease" value="Leber plus disease"/>
</dbReference>
<dbReference type="Orphanet" id="550">
    <property type="disease" value="MELAS"/>
</dbReference>
<dbReference type="Orphanet" id="255210">
    <property type="disease" value="Mitochondrial DNA-associated Leigh syndrome"/>
</dbReference>
<dbReference type="PharmGKB" id="PA31266"/>
<dbReference type="VEuPathDB" id="HostDB:ENSG00000198695"/>
<dbReference type="eggNOG" id="ENOG502S2Q2">
    <property type="taxonomic scope" value="Eukaryota"/>
</dbReference>
<dbReference type="GeneTree" id="ENSGT00390000003988"/>
<dbReference type="HOGENOM" id="CLU_129718_0_0_1"/>
<dbReference type="InParanoid" id="P03923"/>
<dbReference type="OMA" id="WVIYDTG"/>
<dbReference type="PAN-GO" id="P03923">
    <property type="GO annotations" value="1 GO annotation based on evolutionary models"/>
</dbReference>
<dbReference type="PhylomeDB" id="P03923"/>
<dbReference type="TreeFam" id="TF343324"/>
<dbReference type="BioCyc" id="MetaCyc:HS00036-MONOMER"/>
<dbReference type="PathwayCommons" id="P03923"/>
<dbReference type="Reactome" id="R-HSA-611105">
    <property type="pathway name" value="Respiratory electron transport"/>
</dbReference>
<dbReference type="Reactome" id="R-HSA-6799198">
    <property type="pathway name" value="Complex I biogenesis"/>
</dbReference>
<dbReference type="Reactome" id="R-HSA-9837999">
    <property type="pathway name" value="Mitochondrial protein degradation"/>
</dbReference>
<dbReference type="SignaLink" id="P03923"/>
<dbReference type="SIGNOR" id="P03923"/>
<dbReference type="BioGRID-ORCS" id="4541">
    <property type="hits" value="0 hits in 3 CRISPR screens"/>
</dbReference>
<dbReference type="ChiTaRS" id="MT-ND6">
    <property type="organism name" value="human"/>
</dbReference>
<dbReference type="GeneWiki" id="MT-ND6"/>
<dbReference type="GenomeRNAi" id="4541"/>
<dbReference type="Pharos" id="P03923">
    <property type="development level" value="Tclin"/>
</dbReference>
<dbReference type="PRO" id="PR:P03923"/>
<dbReference type="Proteomes" id="UP000005640">
    <property type="component" value="Mitochondrion MT"/>
</dbReference>
<dbReference type="RNAct" id="P03923">
    <property type="molecule type" value="protein"/>
</dbReference>
<dbReference type="Bgee" id="ENSG00000198695">
    <property type="expression patterns" value="Expressed in mucosa of stomach and 98 other cell types or tissues"/>
</dbReference>
<dbReference type="ExpressionAtlas" id="P03923">
    <property type="expression patterns" value="baseline and differential"/>
</dbReference>
<dbReference type="GO" id="GO:0005743">
    <property type="term" value="C:mitochondrial inner membrane"/>
    <property type="evidence" value="ECO:0000314"/>
    <property type="project" value="ComplexPortal"/>
</dbReference>
<dbReference type="GO" id="GO:0005739">
    <property type="term" value="C:mitochondrion"/>
    <property type="evidence" value="ECO:0006056"/>
    <property type="project" value="FlyBase"/>
</dbReference>
<dbReference type="GO" id="GO:0045271">
    <property type="term" value="C:respiratory chain complex I"/>
    <property type="evidence" value="ECO:0007669"/>
    <property type="project" value="Ensembl"/>
</dbReference>
<dbReference type="GO" id="GO:0008137">
    <property type="term" value="F:NADH dehydrogenase (ubiquinone) activity"/>
    <property type="evidence" value="ECO:0000315"/>
    <property type="project" value="UniProtKB"/>
</dbReference>
<dbReference type="GO" id="GO:0009060">
    <property type="term" value="P:aerobic respiration"/>
    <property type="evidence" value="ECO:0000303"/>
    <property type="project" value="ComplexPortal"/>
</dbReference>
<dbReference type="GO" id="GO:0006120">
    <property type="term" value="P:mitochondrial electron transport, NADH to ubiquinone"/>
    <property type="evidence" value="ECO:0000315"/>
    <property type="project" value="UniProtKB"/>
</dbReference>
<dbReference type="GO" id="GO:0032981">
    <property type="term" value="P:mitochondrial respiratory chain complex I assembly"/>
    <property type="evidence" value="ECO:0000315"/>
    <property type="project" value="UniProtKB"/>
</dbReference>
<dbReference type="GO" id="GO:0042776">
    <property type="term" value="P:proton motive force-driven mitochondrial ATP synthesis"/>
    <property type="evidence" value="ECO:0000303"/>
    <property type="project" value="ComplexPortal"/>
</dbReference>
<dbReference type="InterPro" id="IPR050269">
    <property type="entry name" value="ComplexI_Subunit6"/>
</dbReference>
<dbReference type="InterPro" id="IPR001457">
    <property type="entry name" value="NADH_UbQ/plastoQ_OxRdtase_su6"/>
</dbReference>
<dbReference type="PANTHER" id="PTHR11435">
    <property type="entry name" value="NADH UBIQUINONE OXIDOREDUCTASE SUBUNIT ND6"/>
    <property type="match status" value="1"/>
</dbReference>
<dbReference type="PANTHER" id="PTHR11435:SF1">
    <property type="entry name" value="NADH-UBIQUINONE OXIDOREDUCTASE CHAIN 6"/>
    <property type="match status" value="1"/>
</dbReference>
<dbReference type="Pfam" id="PF00499">
    <property type="entry name" value="Oxidored_q3"/>
    <property type="match status" value="1"/>
</dbReference>
<comment type="function">
    <text evidence="7 12">Core subunit of the mitochondrial membrane respiratory chain NADH dehydrogenase (Complex I) which catalyzes electron transfer from NADH through the respiratory chain, using ubiquinone as an electron acceptor (PubMed:14595656, PubMed:8644732). Essential for the catalytic activity and assembly of complex I (PubMed:14595656, PubMed:8644732).</text>
</comment>
<comment type="catalytic activity">
    <reaction evidence="7 12">
        <text>a ubiquinone + NADH + 5 H(+)(in) = a ubiquinol + NAD(+) + 4 H(+)(out)</text>
        <dbReference type="Rhea" id="RHEA:29091"/>
        <dbReference type="Rhea" id="RHEA-COMP:9565"/>
        <dbReference type="Rhea" id="RHEA-COMP:9566"/>
        <dbReference type="ChEBI" id="CHEBI:15378"/>
        <dbReference type="ChEBI" id="CHEBI:16389"/>
        <dbReference type="ChEBI" id="CHEBI:17976"/>
        <dbReference type="ChEBI" id="CHEBI:57540"/>
        <dbReference type="ChEBI" id="CHEBI:57945"/>
        <dbReference type="EC" id="7.1.1.2"/>
    </reaction>
</comment>
<comment type="subunit">
    <text evidence="1">Core subunit of respiratory chain NADH dehydrogenase (Complex I) which is composed of 45 different subunits.</text>
</comment>
<comment type="subcellular location">
    <subcellularLocation>
        <location evidence="1">Mitochondrion inner membrane</location>
        <topology evidence="2">Multi-pass membrane protein</topology>
    </subcellularLocation>
</comment>
<comment type="disease" evidence="3 4 6 10 13 14">
    <disease id="DI-00640">
        <name>Leber hereditary optic neuropathy</name>
        <acronym>LHON</acronym>
        <description>A maternally inherited form of Leber hereditary optic neuropathy, a mitochondrial disease resulting in bilateral painless loss of central vision due to selective degeneration of the retinal ganglion cells and their axons. The disorder shows incomplete penetrance and male predominance. Cardiac conduction defects and neurological defects have also been described in some LHON patients. LHON results from primary mitochondrial DNA mutations affecting the respiratory chain complexes.</description>
        <dbReference type="MIM" id="535000"/>
    </disease>
    <text>The disease is caused by variants affecting the gene represented in this entry.</text>
</comment>
<comment type="disease" evidence="11 12">
    <disease id="DI-00641">
        <name>Leber hereditary optic neuropathy with dystonia</name>
        <acronym>LDYT</acronym>
        <description>A form of Leber hereditary optic neuropathy, a mitochondrial disease resulting in bilateral painless loss of central vision due to selective degeneration of the retinal ganglion cells and their axons. The disorder shows incomplete penetrance and male predominance. LDYT is characterized by the association of optic atrophy and central vision loss with dystonia.</description>
        <dbReference type="MIM" id="500001"/>
    </disease>
    <text>The disease is caused by variants affecting the gene represented in this entry.</text>
</comment>
<comment type="disease" evidence="5">
    <disease id="DI-01983">
        <name>Mitochondrial encephalomyopathy with lactic acidosis and stroke-like episodes syndrome</name>
        <acronym>MELAS</acronym>
        <description>Genetically heterogeneous disorder, characterized by episodic vomiting, seizures, and recurrent cerebral insults resembling strokes and causing hemiparesis, hemianopsia, or cortical blindness.</description>
        <dbReference type="MIM" id="540000"/>
    </disease>
    <text>The disease is caused by variants affecting the gene represented in this entry.</text>
</comment>
<comment type="disease" evidence="7">
    <disease id="DI-01886">
        <name>Leigh syndrome</name>
        <acronym>LS</acronym>
        <description>An early-onset progressive neurodegenerative disorder characterized by the presence of focal, bilateral lesions in one or more areas of the central nervous system including the brainstem, thalamus, basal ganglia, cerebellum and spinal cord. Clinical features depend on which areas of the central nervous system are involved and include subacute onset of psychomotor retardation, hypotonia, ataxia, weakness, vision loss, eye movement abnormalities, seizures, and dysphagia.</description>
        <dbReference type="MIM" id="256000"/>
    </disease>
    <text>The disease is caused by variants affecting the gene represented in this entry.</text>
</comment>
<comment type="similarity">
    <text evidence="15">Belongs to the complex I subunit 6 family.</text>
</comment>
<geneLocation type="mitochondrion"/>
<accession>P03923</accession>
<accession>Q34774</accession>
<accession>Q8HG30</accession>
<reference key="1">
    <citation type="journal article" date="1981" name="Nature">
        <title>Sequence and organization of the human mitochondrial genome.</title>
        <authorList>
            <person name="Anderson S."/>
            <person name="Bankier A.T."/>
            <person name="Barrell B.G."/>
            <person name="de Bruijn M.H.L."/>
            <person name="Coulson A.R."/>
            <person name="Drouin J."/>
            <person name="Eperon I.C."/>
            <person name="Nierlich D.P."/>
            <person name="Roe B.A."/>
            <person name="Sanger F."/>
            <person name="Schreier P.H."/>
            <person name="Smith A.J.H."/>
            <person name="Staden R."/>
            <person name="Young I.G."/>
        </authorList>
    </citation>
    <scope>NUCLEOTIDE SEQUENCE [LARGE SCALE GENOMIC DNA]</scope>
</reference>
<reference key="2">
    <citation type="submission" date="1997-04" db="EMBL/GenBank/DDBJ databases">
        <authorList>
            <person name="Kogelnik A."/>
            <person name="Brown M."/>
        </authorList>
    </citation>
    <scope>SEQUENCE REVISION TO 102; 134 AND 159</scope>
</reference>
<reference key="3">
    <citation type="journal article" date="1995" name="Proc. Natl. Acad. Sci. U.S.A.">
        <title>Recent African origin of modern humans revealed by complete sequences of hominoid mitochondrial DNAs.</title>
        <authorList>
            <person name="Horai S."/>
            <person name="Hayasaka K."/>
            <person name="Kondo R."/>
            <person name="Tsugane K."/>
            <person name="Takahata N."/>
        </authorList>
    </citation>
    <scope>NUCLEOTIDE SEQUENCE [GENOMIC DNA]</scope>
    <source>
        <tissue>Placenta</tissue>
    </source>
</reference>
<reference key="4">
    <citation type="journal article" date="1998" name="Hum. Mutat. Suppl.">
        <title>Leber's hereditary optic neuropathy in Indonesia: two families with the mtDNA 11778G&gt;A and 14484T&gt;C mutations.</title>
        <authorList>
            <person name="Sudoyo H."/>
            <person name="Sitepu M."/>
            <person name="Malik S."/>
            <person name="Poesponegoro H.D."/>
            <person name="Marzuki S."/>
        </authorList>
    </citation>
    <scope>NUCLEOTIDE SEQUENCE [GENOMIC DNA]</scope>
    <scope>VARIANT LHON VAL-64</scope>
</reference>
<reference key="5">
    <citation type="journal article" date="2003" name="Mol. Biol. Evol.">
        <title>Lineage-specific selection in human mtDNA: lack of polymorphisms in a segment of MTND5 gene in haplogroup J.</title>
        <authorList>
            <person name="Moilanen J.S."/>
            <person name="Finnila S."/>
            <person name="Majamaa K."/>
        </authorList>
    </citation>
    <scope>NUCLEOTIDE SEQUENCE [GENOMIC DNA]</scope>
</reference>
<reference key="6">
    <citation type="journal article" date="2000" name="Nature">
        <title>Mitochondrial genome variation and the origin of modern humans.</title>
        <authorList>
            <person name="Ingman M."/>
            <person name="Kaessmann H."/>
            <person name="Paeaebo S."/>
            <person name="Gyllensten U."/>
        </authorList>
    </citation>
    <scope>NUCLEOTIDE SEQUENCE [GENOMIC DNA]</scope>
</reference>
<reference key="7">
    <citation type="journal article" date="2003" name="Genome Res.">
        <title>Mitochondrial genome variation and evolutionary history of Australian and New Guinean aborigines.</title>
        <authorList>
            <person name="Ingman M."/>
            <person name="Gyllensten U."/>
        </authorList>
    </citation>
    <scope>NUCLEOTIDE SEQUENCE [GENOMIC DNA]</scope>
</reference>
<reference key="8">
    <citation type="journal article" date="2004" name="Int. J. Legal Med.">
        <title>Single nucleotide polymorphisms over the entire mtDNA genome that increase the power of forensic testing in Caucasians.</title>
        <authorList>
            <person name="Coble M.D."/>
            <person name="Just R.S."/>
            <person name="O'Callaghan J.E."/>
            <person name="Letmanyi I.H."/>
            <person name="Peterson C.T."/>
            <person name="Irwin J.A."/>
            <person name="Parsons T.J."/>
        </authorList>
    </citation>
    <scope>NUCLEOTIDE SEQUENCE [GENOMIC DNA]</scope>
</reference>
<reference key="9">
    <citation type="journal article" date="1991" name="Biochem. Biophys. Res. Commun.">
        <title>Patients with idiopathic cardiomyopathy belong to the same mitochondrial DNA gene family of Parkinson's disease and mitochondrial encephalomyopathy.</title>
        <authorList>
            <person name="Ozawa T."/>
            <person name="Tanaka M."/>
            <person name="Sugiyama S."/>
            <person name="Ino H."/>
            <person name="Ohno K."/>
            <person name="Hattori K."/>
            <person name="Ohbayashi T."/>
            <person name="Ito T."/>
            <person name="Deguchi H."/>
            <person name="Kawamura K."/>
            <person name="Nakane Y."/>
            <person name="Hashiba K."/>
        </authorList>
    </citation>
    <scope>VARIANT VAL-58</scope>
</reference>
<reference key="10">
    <citation type="journal article" date="1991" name="Hum. Genet.">
        <title>Normal variants of human mitochondrial DNA and translation products: the building of a reference data base.</title>
        <authorList>
            <person name="Marzuki S."/>
            <person name="Noer A.S."/>
            <person name="Lertrit P."/>
            <person name="Thyagarajan D."/>
            <person name="Kapsa R."/>
            <person name="Utthanaphol P."/>
            <person name="Byrne E."/>
        </authorList>
    </citation>
    <scope>VARIANT CYS-165</scope>
</reference>
<reference key="11">
    <citation type="journal article" date="1992" name="Biochem. Biophys. Res. Commun.">
        <title>An ND-6 mitochondrial DNA mutation associated with Leber hereditary optic neuropathy.</title>
        <authorList>
            <person name="Johns D.R."/>
            <person name="Neufeld M.J."/>
            <person name="Park R.D."/>
        </authorList>
    </citation>
    <scope>VARIANT LHON VAL-64</scope>
</reference>
<reference key="12">
    <citation type="journal article" date="1994" name="Proc. Natl. Acad. Sci. U.S.A.">
        <title>A mitochondrial DNA mutation at nucleotide pair 14459 of the NADH dehydrogenase subunit 6 gene associated with maternally inherited Leber hereditary optic neuropathy and dystonia.</title>
        <authorList>
            <person name="Jun A.S."/>
            <person name="Brown M.D."/>
            <person name="Wallace D.C."/>
        </authorList>
    </citation>
    <scope>VARIANT LDYT VAL-72</scope>
</reference>
<reference key="13">
    <citation type="journal article" date="1996" name="Am. J. Hum. Genet.">
        <title>Genetic and biochemical impairment of mitochondrial complex I activity in a family with Leber hereditary optic neuropathy and hereditary spastic dystonia.</title>
        <authorList>
            <person name="de Vries D.D."/>
            <person name="Went L.N."/>
            <person name="Bruyn G.W."/>
            <person name="Scholte H.R."/>
            <person name="Hofstra R.M.W."/>
            <person name="Bolhuis P.A."/>
            <person name="van Oost B.A."/>
        </authorList>
    </citation>
    <scope>VARIANT LDYT MET-26</scope>
    <scope>CHARACTERIZATION OF VARIANT LDYT MET-26</scope>
    <scope>FUNCTION</scope>
    <scope>CATALYTIC ACTIVITY</scope>
</reference>
<reference key="14">
    <citation type="journal article" date="1996" name="Ger. J. Ophthalmol.">
        <title>Leber's hereditary optic neuropathy: clinical and molecular genetic results obtained in a family with a new point mutation at nucleotide position 14498 in the ND 6 gene.</title>
        <authorList>
            <person name="Leo-Kottler B."/>
            <person name="Christ-Adler M."/>
            <person name="Baumann B."/>
            <person name="Zrenner E."/>
            <person name="Wissinger B."/>
        </authorList>
    </citation>
    <scope>VARIANT LHON CYS-59</scope>
</reference>
<reference key="15">
    <citation type="journal article" date="1999" name="Graefes Arch. Clin. Exp. Ophthalmol.">
        <title>Leber's hereditary optic neuropathy: clinical and molecular genetic findings in a patient with a new mutation in the ND6 gene.</title>
        <authorList>
            <person name="Besch D."/>
            <person name="Leo-Kottler B."/>
            <person name="Zrenner E."/>
            <person name="Wissinger B."/>
        </authorList>
    </citation>
    <scope>VARIANT LHON SER-36</scope>
</reference>
<reference key="16">
    <citation type="journal article" date="2001" name="Brain">
        <title>The mitochondrial ND6 gene is a hot spot for mutations that cause Leber's hereditary optic neuropathy.</title>
        <authorList>
            <person name="Chinnery P.F."/>
            <person name="Brown D.T."/>
            <person name="Andrews R.M."/>
            <person name="Singh-Kler R."/>
            <person name="Riordan-Eva P."/>
            <person name="Lindley J."/>
            <person name="Applegarth D.A."/>
            <person name="Turnbull D.M."/>
            <person name="Howell N."/>
        </authorList>
    </citation>
    <scope>VARIANT LHON SER-60</scope>
    <scope>VARIANTS ALA-31 AND VAL-33</scope>
</reference>
<reference key="17">
    <citation type="journal article" date="2001" name="Eur. J. Hum. Genet.">
        <title>An mtDNA mutation, 14453G--&gt;A, in the NADH dehydrogenase subunit 6 associated with severe MELAS syndrome.</title>
        <authorList>
            <person name="Ravn K."/>
            <person name="Wibrand F."/>
            <person name="Hansen F.J."/>
            <person name="Horn N."/>
            <person name="Rosenberg T."/>
            <person name="Schwartz M."/>
        </authorList>
    </citation>
    <scope>VARIANT MELAS VAL-74</scope>
</reference>
<reference key="18">
    <citation type="journal article" date="2003" name="Ann. Neurol.">
        <title>Impaired complex I assembly in a Leigh syndrome patient with a novel missense mutation in the ND6 gene.</title>
        <authorList>
            <person name="Ugalde C."/>
            <person name="Triepels R.H."/>
            <person name="Coenen M.J."/>
            <person name="van den Heuvel L.P."/>
            <person name="Smeets R."/>
            <person name="Uusimaa J."/>
            <person name="Briones P."/>
            <person name="Campistol J."/>
            <person name="Majamaa K."/>
            <person name="Smeitink J.A."/>
            <person name="Nijtmans L.G."/>
        </authorList>
    </citation>
    <scope>VARIANT LS VAL-63</scope>
    <scope>CHARACTERIZATION OF LS VAL-63</scope>
    <scope>FUNCTION</scope>
    <scope>CATALYTIC ACTIVITY</scope>
</reference>
<reference key="19">
    <citation type="journal article" date="2022" name="Hum. Mol. Genet.">
        <title>Leber's hereditary optic neuropathy (LHON)-associated ND6 14 484 T &gt; C mutation caused pleiotropic effects on the complex I, RNA homeostasis, apoptosis and mitophagy.</title>
        <authorList>
            <person name="Liang M."/>
            <person name="Ji C."/>
            <person name="Zhang L."/>
            <person name="Wang X."/>
            <person name="Hu C."/>
            <person name="Zhang J."/>
            <person name="Zhu Y."/>
            <person name="Mo J.Q."/>
            <person name="Guan M.X."/>
        </authorList>
    </citation>
    <scope>CHARACTERIZATION OF VARIANT LHON VAL-64</scope>
</reference>
<keyword id="KW-0002">3D-structure</keyword>
<keyword id="KW-0225">Disease variant</keyword>
<keyword id="KW-1023">Dystonia</keyword>
<keyword id="KW-0249">Electron transport</keyword>
<keyword id="KW-0429">Leber hereditary optic neuropathy</keyword>
<keyword id="KW-0431">Leigh syndrome</keyword>
<keyword id="KW-0867">MELAS syndrome</keyword>
<keyword id="KW-0472">Membrane</keyword>
<keyword id="KW-0496">Mitochondrion</keyword>
<keyword id="KW-0999">Mitochondrion inner membrane</keyword>
<keyword id="KW-0520">NAD</keyword>
<keyword id="KW-1274">Primary mitochondrial disease</keyword>
<keyword id="KW-1267">Proteomics identification</keyword>
<keyword id="KW-1185">Reference proteome</keyword>
<keyword id="KW-0679">Respiratory chain</keyword>
<keyword id="KW-1278">Translocase</keyword>
<keyword id="KW-0812">Transmembrane</keyword>
<keyword id="KW-1133">Transmembrane helix</keyword>
<keyword id="KW-0813">Transport</keyword>
<keyword id="KW-0830">Ubiquinone</keyword>
<feature type="chain" id="PRO_0000118291" description="NADH-ubiquinone oxidoreductase chain 6">
    <location>
        <begin position="1"/>
        <end position="174"/>
    </location>
</feature>
<feature type="transmembrane region" description="Helical" evidence="2">
    <location>
        <begin position="1"/>
        <end position="21"/>
    </location>
</feature>
<feature type="transmembrane region" description="Helical" evidence="2">
    <location>
        <begin position="26"/>
        <end position="46"/>
    </location>
</feature>
<feature type="transmembrane region" description="Helical" evidence="2">
    <location>
        <begin position="47"/>
        <end position="67"/>
    </location>
</feature>
<feature type="transmembrane region" description="Helical" evidence="2">
    <location>
        <begin position="86"/>
        <end position="106"/>
    </location>
</feature>
<feature type="transmembrane region" description="Helical" evidence="2">
    <location>
        <begin position="111"/>
        <end position="131"/>
    </location>
</feature>
<feature type="transmembrane region" description="Helical" evidence="2">
    <location>
        <begin position="151"/>
        <end position="171"/>
    </location>
</feature>
<feature type="sequence variant" id="VAR_008394" description="In LDYT; decrease in enzyme activity; dbSNP:rs387906424." evidence="12">
    <original>I</original>
    <variation>M</variation>
    <location>
        <position position="26"/>
    </location>
</feature>
<feature type="sequence variant" id="VAR_014393" description="In dbSNP:rs41354845." evidence="4">
    <original>V</original>
    <variation>A</variation>
    <location>
        <position position="31"/>
    </location>
</feature>
<feature type="sequence variant" id="VAR_014394" description="In dbSNP:rs386829219." evidence="4">
    <original>I</original>
    <variation>V</variation>
    <location>
        <position position="33"/>
    </location>
</feature>
<feature type="sequence variant" id="VAR_008395" description="In LHON; dbSNP:rs397515506." evidence="3">
    <original>G</original>
    <variation>S</variation>
    <location>
        <position position="36"/>
    </location>
</feature>
<feature type="sequence variant" id="VAR_014395" description="In dbSNP:rs201327354." evidence="9">
    <original>I</original>
    <variation>V</variation>
    <location>
        <position position="58"/>
    </location>
</feature>
<feature type="sequence variant" id="VAR_008396" description="In LHON; dbSNP:rs869025186." evidence="13">
    <original>Y</original>
    <variation>C</variation>
    <location>
        <position position="59"/>
    </location>
</feature>
<feature type="sequence variant" id="VAR_014396" description="In LHON; dbSNP:rs199476106." evidence="4">
    <original>L</original>
    <variation>S</variation>
    <location>
        <position position="60"/>
    </location>
</feature>
<feature type="sequence variant" id="VAR_064568" description="In LS; decrease in enzyme activity and impaired assembly of complex I; dbSNP:rs199476109." evidence="7">
    <original>M</original>
    <variation>V</variation>
    <location>
        <position position="63"/>
    </location>
</feature>
<feature type="sequence variant" id="VAR_008512" description="In LHON; dbSNP:rs199476108.">
    <original>M</original>
    <variation>I</variation>
    <location>
        <position position="64"/>
    </location>
</feature>
<feature type="sequence variant" id="VAR_004763" description="In LHON; low severity; up to 50% of vision recovery; results in decreased complex I activity; dbSNP:rs199476104." evidence="6 10 14">
    <original>M</original>
    <variation>V</variation>
    <location>
        <position position="64"/>
    </location>
</feature>
<feature type="sequence variant" id="VAR_004764" description="In LDYT; most severe mutation with no vision recovery; dbSNP:rs199476105." evidence="11">
    <original>A</original>
    <variation>V</variation>
    <location>
        <position position="72"/>
    </location>
</feature>
<feature type="sequence variant" id="VAR_014397" description="In MELAS; dbSNP:rs199476107." evidence="5">
    <original>A</original>
    <variation>V</variation>
    <location>
        <position position="74"/>
    </location>
</feature>
<feature type="sequence variant" id="VAR_008604" description="In dbSNP:rs200933339." evidence="8">
    <original>Y</original>
    <variation>C</variation>
    <location>
        <position position="165"/>
    </location>
</feature>
<feature type="sequence conflict" description="In Ref. 1; CAA24037." evidence="15" ref="1">
    <original>L</original>
    <variation>F</variation>
    <location>
        <position position="102"/>
    </location>
</feature>
<feature type="sequence conflict" description="In Ref. 1; CAA24037." evidence="15" ref="1">
    <original>L</original>
    <variation>F</variation>
    <location>
        <position position="134"/>
    </location>
</feature>
<feature type="sequence conflict" description="In Ref. 1; CAA24037." evidence="15" ref="1">
    <original>T</original>
    <variation>P</variation>
    <location>
        <position position="159"/>
    </location>
</feature>
<sequence>MMYALFLLSVGLVMGFVGFSSKPSPIYGGLVLIVSGVVGCVIILNFGGGYMGLMVFLIYLGGMMVVFGYTTAMAIEEYPEAWGSGVEVLVSVLVGLAMEVGLVLWVKEYDGVVVVVNFNSVGSWMIYEGEGSGLIREDPIGAGALYDYGRWLVVVTGWTLFVGVYIVIEIARGN</sequence>
<evidence type="ECO:0000250" key="1">
    <source>
        <dbReference type="UniProtKB" id="P03924"/>
    </source>
</evidence>
<evidence type="ECO:0000255" key="2"/>
<evidence type="ECO:0000269" key="3">
    <source>
    </source>
</evidence>
<evidence type="ECO:0000269" key="4">
    <source>
    </source>
</evidence>
<evidence type="ECO:0000269" key="5">
    <source>
    </source>
</evidence>
<evidence type="ECO:0000269" key="6">
    <source>
    </source>
</evidence>
<evidence type="ECO:0000269" key="7">
    <source>
    </source>
</evidence>
<evidence type="ECO:0000269" key="8">
    <source>
    </source>
</evidence>
<evidence type="ECO:0000269" key="9">
    <source>
    </source>
</evidence>
<evidence type="ECO:0000269" key="10">
    <source>
    </source>
</evidence>
<evidence type="ECO:0000269" key="11">
    <source>
    </source>
</evidence>
<evidence type="ECO:0000269" key="12">
    <source>
    </source>
</evidence>
<evidence type="ECO:0000269" key="13">
    <source>
    </source>
</evidence>
<evidence type="ECO:0000269" key="14">
    <source>
    </source>
</evidence>
<evidence type="ECO:0000305" key="15"/>
<protein>
    <recommendedName>
        <fullName>NADH-ubiquinone oxidoreductase chain 6</fullName>
        <ecNumber evidence="7 12">7.1.1.2</ecNumber>
    </recommendedName>
    <alternativeName>
        <fullName>NADH dehydrogenase subunit 6</fullName>
    </alternativeName>
</protein>
<gene>
    <name type="primary">MT-ND6</name>
    <name type="synonym">MTND6</name>
    <name type="synonym">NADH6</name>
    <name type="synonym">ND6</name>
</gene>
<organism>
    <name type="scientific">Homo sapiens</name>
    <name type="common">Human</name>
    <dbReference type="NCBI Taxonomy" id="9606"/>
    <lineage>
        <taxon>Eukaryota</taxon>
        <taxon>Metazoa</taxon>
        <taxon>Chordata</taxon>
        <taxon>Craniata</taxon>
        <taxon>Vertebrata</taxon>
        <taxon>Euteleostomi</taxon>
        <taxon>Mammalia</taxon>
        <taxon>Eutheria</taxon>
        <taxon>Euarchontoglires</taxon>
        <taxon>Primates</taxon>
        <taxon>Haplorrhini</taxon>
        <taxon>Catarrhini</taxon>
        <taxon>Hominidae</taxon>
        <taxon>Homo</taxon>
    </lineage>
</organism>
<name>NU6M_HUMAN</name>